<keyword id="KW-0002">3D-structure</keyword>
<keyword id="KW-0007">Acetylation</keyword>
<keyword id="KW-0025">Alternative splicing</keyword>
<keyword id="KW-0119">Carbohydrate metabolism</keyword>
<keyword id="KW-0903">Direct protein sequencing</keyword>
<keyword id="KW-0225">Disease variant</keyword>
<keyword id="KW-0313">Glucose metabolism</keyword>
<keyword id="KW-0431">Leigh syndrome</keyword>
<keyword id="KW-0460">Magnesium</keyword>
<keyword id="KW-0479">Metal-binding</keyword>
<keyword id="KW-0496">Mitochondrion</keyword>
<keyword id="KW-0560">Oxidoreductase</keyword>
<keyword id="KW-0597">Phosphoprotein</keyword>
<keyword id="KW-1274">Primary mitochondrial disease</keyword>
<keyword id="KW-1267">Proteomics identification</keyword>
<keyword id="KW-0670">Pyruvate</keyword>
<keyword id="KW-1185">Reference proteome</keyword>
<keyword id="KW-0786">Thiamine pyrophosphate</keyword>
<keyword id="KW-0809">Transit peptide</keyword>
<keyword id="KW-0816">Tricarboxylic acid cycle</keyword>
<organism>
    <name type="scientific">Homo sapiens</name>
    <name type="common">Human</name>
    <dbReference type="NCBI Taxonomy" id="9606"/>
    <lineage>
        <taxon>Eukaryota</taxon>
        <taxon>Metazoa</taxon>
        <taxon>Chordata</taxon>
        <taxon>Craniata</taxon>
        <taxon>Vertebrata</taxon>
        <taxon>Euteleostomi</taxon>
        <taxon>Mammalia</taxon>
        <taxon>Eutheria</taxon>
        <taxon>Euarchontoglires</taxon>
        <taxon>Primates</taxon>
        <taxon>Haplorrhini</taxon>
        <taxon>Catarrhini</taxon>
        <taxon>Hominidae</taxon>
        <taxon>Homo</taxon>
    </lineage>
</organism>
<comment type="function">
    <text evidence="11 20">The pyruvate dehydrogenase complex catalyzes the overall conversion of pyruvate to acetyl-CoA and CO(2), and thereby links the glycolytic pathway to the tricarboxylic cycle.</text>
</comment>
<comment type="catalytic activity">
    <reaction evidence="10 11 20">
        <text>N(6)-[(R)-lipoyl]-L-lysyl-[protein] + pyruvate + H(+) = N(6)-[(R)-S(8)-acetyldihydrolipoyl]-L-lysyl-[protein] + CO2</text>
        <dbReference type="Rhea" id="RHEA:19189"/>
        <dbReference type="Rhea" id="RHEA-COMP:10474"/>
        <dbReference type="Rhea" id="RHEA-COMP:10478"/>
        <dbReference type="ChEBI" id="CHEBI:15361"/>
        <dbReference type="ChEBI" id="CHEBI:15378"/>
        <dbReference type="ChEBI" id="CHEBI:16526"/>
        <dbReference type="ChEBI" id="CHEBI:83099"/>
        <dbReference type="ChEBI" id="CHEBI:83111"/>
        <dbReference type="EC" id="1.2.4.1"/>
    </reaction>
</comment>
<comment type="cofactor">
    <cofactor evidence="5 11">
        <name>thiamine diphosphate</name>
        <dbReference type="ChEBI" id="CHEBI:58937"/>
    </cofactor>
    <cofactor evidence="5">
        <name>Mg(2+)</name>
        <dbReference type="ChEBI" id="CHEBI:18420"/>
    </cofactor>
</comment>
<comment type="activity regulation">
    <text evidence="10 11 20">Pyruvate dehydrogenase activity is inhibited by phosphorylation of PDHA1; it is reactivated by dephosphorylation.</text>
</comment>
<comment type="biophysicochemical properties">
    <kinetics>
        <KM evidence="11">41 uM for pyruvate</KM>
    </kinetics>
</comment>
<comment type="subunit">
    <text evidence="5 8 10 11 16">Heterotetramer of two PDHA1 and two PDHB subunits. The heterotetramer interacts with DLAT, and is part of the multimeric pyruvate dehydrogenase complex that contains multiple copies of pyruvate dehydrogenase (E1), dihydrolipoamide acetyltransferase (DLAT, E2) and lipoamide dehydrogenase (DLD, E3). These subunits are bound to an inner core composed of about 48 DLAT and 12 PDHX molecules.</text>
</comment>
<comment type="interaction">
    <interactant intactId="EBI-715747">
        <id>P08559</id>
    </interactant>
    <interactant intactId="EBI-349854">
        <id>P13569</id>
        <label>CFTR</label>
    </interactant>
    <organismsDiffer>false</organismsDiffer>
    <experiments>5</experiments>
</comment>
<comment type="interaction">
    <interactant intactId="EBI-715747">
        <id>P08559</id>
    </interactant>
    <interactant intactId="EBI-473801">
        <id>Q16891</id>
        <label>IMMT</label>
    </interactant>
    <organismsDiffer>false</organismsDiffer>
    <experiments>4</experiments>
</comment>
<comment type="interaction">
    <interactant intactId="EBI-715747">
        <id>P08559</id>
    </interactant>
    <interactant intactId="EBI-1035872">
        <id>P11177</id>
        <label>PDHB</label>
    </interactant>
    <organismsDiffer>false</organismsDiffer>
    <experiments>5</experiments>
</comment>
<comment type="interaction">
    <interactant intactId="EBI-715747">
        <id>P08559</id>
    </interactant>
    <interactant intactId="EBI-7016221">
        <id>Q15118</id>
        <label>PDK1</label>
    </interactant>
    <organismsDiffer>false</organismsDiffer>
    <experiments>2</experiments>
</comment>
<comment type="interaction">
    <interactant intactId="EBI-25766512">
        <id>P08559-1</id>
    </interactant>
    <interactant intactId="EBI-25766519">
        <id>P11177-1</id>
        <label>PDHB</label>
    </interactant>
    <organismsDiffer>false</organismsDiffer>
    <experiments>4</experiments>
</comment>
<comment type="subcellular location">
    <subcellularLocation>
        <location>Mitochondrion matrix</location>
    </subcellularLocation>
</comment>
<comment type="alternative products">
    <event type="alternative splicing"/>
    <isoform>
        <id>P08559-1</id>
        <name>1</name>
        <sequence type="displayed"/>
    </isoform>
    <isoform>
        <id>P08559-2</id>
        <name>2</name>
        <sequence type="described" ref="VSP_042569"/>
    </isoform>
    <isoform>
        <id>P08559-3</id>
        <name>3</name>
        <sequence type="described" ref="VSP_042570"/>
    </isoform>
    <isoform>
        <id>P08559-4</id>
        <name>4</name>
        <sequence type="described" ref="VSP_043363"/>
    </isoform>
</comment>
<comment type="tissue specificity">
    <text>Ubiquitous.</text>
</comment>
<comment type="PTM">
    <text evidence="4 10 11">Phosphorylation at Ser-232, Ser-293 and Ser-300 by PDK family kinases inactivates the enzyme; for this phosphorylation at a single site is sufficient. Dephosphorylation at all three sites, i.e. at Ser-232, Ser-293 and Ser-300, is required for reactivation.</text>
</comment>
<comment type="PTM">
    <text evidence="1">Acetylation alters the phosphorylation pattern. Deacetylated by SIRT3 (By similarity).</text>
</comment>
<comment type="disease" evidence="6 7 9 12 15 16 17 18 19 21 22 23 24 25 26 27 28 29 30">
    <disease id="DI-02238">
        <name>Pyruvate dehydrogenase E1-alpha deficiency</name>
        <acronym>PDHAD</acronym>
        <description>An enzymatic defect causing primary lactic acidosis in children. It is associated with a broad clinical spectrum ranging from fatal lactic acidosis in the newborn to chronic neurologic dysfunction with structural abnormalities in the central nervous system without systemic acidosis.</description>
        <dbReference type="MIM" id="312170"/>
    </disease>
    <text>The disease is caused by variants affecting the gene represented in this entry.</text>
</comment>
<comment type="sequence caution" evidence="34">
    <conflict type="erroneous initiation">
        <sequence resource="EMBL-CDS" id="AAA60055"/>
    </conflict>
    <text>Extended N-terminus.</text>
</comment>
<comment type="sequence caution" evidence="34">
    <conflict type="frameshift">
        <sequence resource="EMBL-CDS" id="AAB59581"/>
    </conflict>
</comment>
<proteinExistence type="evidence at protein level"/>
<gene>
    <name type="primary">PDHA1</name>
    <name type="synonym">PHE1A</name>
</gene>
<protein>
    <recommendedName>
        <fullName>Pyruvate dehydrogenase E1 component subunit alpha, somatic form, mitochondrial</fullName>
        <ecNumber>1.2.4.1</ecNumber>
    </recommendedName>
    <alternativeName>
        <fullName>PDHE1-A type I</fullName>
    </alternativeName>
</protein>
<accession>P08559</accession>
<accession>A5YVE9</accession>
<accession>B2R5P7</accession>
<accession>B7Z3T7</accession>
<accession>B7Z3X5</accession>
<accession>Q53H41</accession>
<accession>Q5JPT8</accession>
<accession>Q9NP12</accession>
<accession>Q9UBJ8</accession>
<accession>Q9UBU0</accession>
<accession>Q9UNG4</accession>
<accession>Q9UNG5</accession>
<reference key="1">
    <citation type="journal article" date="1990" name="Gene">
        <title>Characterization and nucleotide sequence of the gene encoding the human pyruvate dehydrogenase alpha-subunit.</title>
        <authorList>
            <person name="Koike K."/>
            <person name="Urata Y."/>
            <person name="Matsuo S."/>
            <person name="Koike M."/>
        </authorList>
    </citation>
    <scope>NUCLEOTIDE SEQUENCE [GENOMIC DNA]</scope>
    <source>
        <tissue>Leukocyte</tissue>
    </source>
</reference>
<reference key="2">
    <citation type="journal article" date="1989" name="Proc. Natl. Acad. Sci. U.S.A.">
        <title>Characterization of cDNAs encoding human pyruvate dehydrogenase alpha subunit.</title>
        <authorList>
            <person name="Ho L."/>
            <person name="Wexler I.D."/>
            <person name="Liu T.C."/>
            <person name="Thekkumkara T.J."/>
            <person name="Patel M.S."/>
        </authorList>
    </citation>
    <scope>NUCLEOTIDE SEQUENCE [MRNA] (ISOFORM 1)</scope>
    <scope>PROTEIN SEQUENCE OF 30-50</scope>
    <scope>TRANSIT PEPTIDE</scope>
</reference>
<reference key="3">
    <citation type="submission" date="1990-04" db="EMBL/GenBank/DDBJ databases">
        <authorList>
            <person name="Huh T.L."/>
            <person name="Chi Y.T."/>
            <person name="Casazza J.P."/>
            <person name="Veech R.L."/>
            <person name="Song B.J."/>
        </authorList>
    </citation>
    <scope>NUCLEOTIDE SEQUENCE [MRNA] (ISOFORM 1)</scope>
    <source>
        <tissue>Brain</tissue>
        <tissue>Liver</tissue>
    </source>
</reference>
<reference key="4">
    <citation type="journal article" date="1987" name="J. Biol. Chem.">
        <title>The human pyruvate dehydrogenase complex. Isolation of cDNA clones for the E1 alpha subunit, sequence analysis, and characterization of the mRNA.</title>
        <authorList>
            <person name="Dahl H.-H.M."/>
            <person name="Hunt S.M."/>
            <person name="Hutchison W.M."/>
            <person name="Brown G.K."/>
        </authorList>
    </citation>
    <scope>NUCLEOTIDE SEQUENCE [MRNA] (ISOFORM 1)</scope>
</reference>
<reference key="5">
    <citation type="journal article" date="1989" name="J. Biol. Chem.">
        <title>Structural organization of the gene for the E1 alpha subunit of the human pyruvate dehydrogenase complex.</title>
        <authorList>
            <person name="Maragos C."/>
            <person name="Hutchinson W.M."/>
            <person name="Hayasaki K."/>
            <person name="Brown G.K."/>
            <person name="Dahl H.-H.M."/>
        </authorList>
    </citation>
    <scope>SEQUENCE REVISION</scope>
</reference>
<reference key="6">
    <citation type="journal article" date="1988" name="J. Biol. Chem.">
        <title>Isolation of a full-length complementary DNA coding for human E1 alpha subunit of the pyruvate dehydrogenase complex.</title>
        <authorList>
            <person name="de Meirleir L."/>
            <person name="MacKay N."/>
            <person name="Wah A.M.L.H."/>
            <person name="Robinson B.H."/>
        </authorList>
    </citation>
    <scope>NUCLEOTIDE SEQUENCE [MRNA] (ISOFORM 1)</scope>
</reference>
<reference key="7">
    <citation type="journal article" date="1988" name="Proc. Natl. Acad. Sci. U.S.A.">
        <title>Cloning and sequencing of cDNAs encoding alpha and beta subunits of human pyruvate dehydrogenase.</title>
        <authorList>
            <person name="Koike K."/>
            <person name="Ohta S."/>
            <person name="Urata Y."/>
            <person name="Kagawa Y."/>
            <person name="Koike M."/>
        </authorList>
    </citation>
    <scope>NUCLEOTIDE SEQUENCE [MRNA] (ISOFORM 1)</scope>
</reference>
<reference key="8">
    <citation type="submission" date="2007-05" db="EMBL/GenBank/DDBJ databases">
        <authorList>
            <person name="Okajima K."/>
        </authorList>
    </citation>
    <scope>NUCLEOTIDE SEQUENCE [MRNA] (ISOFORM 4)</scope>
</reference>
<reference key="9">
    <citation type="journal article" date="2004" name="Nat. Genet.">
        <title>Complete sequencing and characterization of 21,243 full-length human cDNAs.</title>
        <authorList>
            <person name="Ota T."/>
            <person name="Suzuki Y."/>
            <person name="Nishikawa T."/>
            <person name="Otsuki T."/>
            <person name="Sugiyama T."/>
            <person name="Irie R."/>
            <person name="Wakamatsu A."/>
            <person name="Hayashi K."/>
            <person name="Sato H."/>
            <person name="Nagai K."/>
            <person name="Kimura K."/>
            <person name="Makita H."/>
            <person name="Sekine M."/>
            <person name="Obayashi M."/>
            <person name="Nishi T."/>
            <person name="Shibahara T."/>
            <person name="Tanaka T."/>
            <person name="Ishii S."/>
            <person name="Yamamoto J."/>
            <person name="Saito K."/>
            <person name="Kawai Y."/>
            <person name="Isono Y."/>
            <person name="Nakamura Y."/>
            <person name="Nagahari K."/>
            <person name="Murakami K."/>
            <person name="Yasuda T."/>
            <person name="Iwayanagi T."/>
            <person name="Wagatsuma M."/>
            <person name="Shiratori A."/>
            <person name="Sudo H."/>
            <person name="Hosoiri T."/>
            <person name="Kaku Y."/>
            <person name="Kodaira H."/>
            <person name="Kondo H."/>
            <person name="Sugawara M."/>
            <person name="Takahashi M."/>
            <person name="Kanda K."/>
            <person name="Yokoi T."/>
            <person name="Furuya T."/>
            <person name="Kikkawa E."/>
            <person name="Omura Y."/>
            <person name="Abe K."/>
            <person name="Kamihara K."/>
            <person name="Katsuta N."/>
            <person name="Sato K."/>
            <person name="Tanikawa M."/>
            <person name="Yamazaki M."/>
            <person name="Ninomiya K."/>
            <person name="Ishibashi T."/>
            <person name="Yamashita H."/>
            <person name="Murakawa K."/>
            <person name="Fujimori K."/>
            <person name="Tanai H."/>
            <person name="Kimata M."/>
            <person name="Watanabe M."/>
            <person name="Hiraoka S."/>
            <person name="Chiba Y."/>
            <person name="Ishida S."/>
            <person name="Ono Y."/>
            <person name="Takiguchi S."/>
            <person name="Watanabe S."/>
            <person name="Yosida M."/>
            <person name="Hotuta T."/>
            <person name="Kusano J."/>
            <person name="Kanehori K."/>
            <person name="Takahashi-Fujii A."/>
            <person name="Hara H."/>
            <person name="Tanase T.-O."/>
            <person name="Nomura Y."/>
            <person name="Togiya S."/>
            <person name="Komai F."/>
            <person name="Hara R."/>
            <person name="Takeuchi K."/>
            <person name="Arita M."/>
            <person name="Imose N."/>
            <person name="Musashino K."/>
            <person name="Yuuki H."/>
            <person name="Oshima A."/>
            <person name="Sasaki N."/>
            <person name="Aotsuka S."/>
            <person name="Yoshikawa Y."/>
            <person name="Matsunawa H."/>
            <person name="Ichihara T."/>
            <person name="Shiohata N."/>
            <person name="Sano S."/>
            <person name="Moriya S."/>
            <person name="Momiyama H."/>
            <person name="Satoh N."/>
            <person name="Takami S."/>
            <person name="Terashima Y."/>
            <person name="Suzuki O."/>
            <person name="Nakagawa S."/>
            <person name="Senoh A."/>
            <person name="Mizoguchi H."/>
            <person name="Goto Y."/>
            <person name="Shimizu F."/>
            <person name="Wakebe H."/>
            <person name="Hishigaki H."/>
            <person name="Watanabe T."/>
            <person name="Sugiyama A."/>
            <person name="Takemoto M."/>
            <person name="Kawakami B."/>
            <person name="Yamazaki M."/>
            <person name="Watanabe K."/>
            <person name="Kumagai A."/>
            <person name="Itakura S."/>
            <person name="Fukuzumi Y."/>
            <person name="Fujimori Y."/>
            <person name="Komiyama M."/>
            <person name="Tashiro H."/>
            <person name="Tanigami A."/>
            <person name="Fujiwara T."/>
            <person name="Ono T."/>
            <person name="Yamada K."/>
            <person name="Fujii Y."/>
            <person name="Ozaki K."/>
            <person name="Hirao M."/>
            <person name="Ohmori Y."/>
            <person name="Kawabata A."/>
            <person name="Hikiji T."/>
            <person name="Kobatake N."/>
            <person name="Inagaki H."/>
            <person name="Ikema Y."/>
            <person name="Okamoto S."/>
            <person name="Okitani R."/>
            <person name="Kawakami T."/>
            <person name="Noguchi S."/>
            <person name="Itoh T."/>
            <person name="Shigeta K."/>
            <person name="Senba T."/>
            <person name="Matsumura K."/>
            <person name="Nakajima Y."/>
            <person name="Mizuno T."/>
            <person name="Morinaga M."/>
            <person name="Sasaki M."/>
            <person name="Togashi T."/>
            <person name="Oyama M."/>
            <person name="Hata H."/>
            <person name="Watanabe M."/>
            <person name="Komatsu T."/>
            <person name="Mizushima-Sugano J."/>
            <person name="Satoh T."/>
            <person name="Shirai Y."/>
            <person name="Takahashi Y."/>
            <person name="Nakagawa K."/>
            <person name="Okumura K."/>
            <person name="Nagase T."/>
            <person name="Nomura N."/>
            <person name="Kikuchi H."/>
            <person name="Masuho Y."/>
            <person name="Yamashita R."/>
            <person name="Nakai K."/>
            <person name="Yada T."/>
            <person name="Nakamura Y."/>
            <person name="Ohara O."/>
            <person name="Isogai T."/>
            <person name="Sugano S."/>
        </authorList>
    </citation>
    <scope>NUCLEOTIDE SEQUENCE [LARGE SCALE MRNA] (ISOFORMS 1; 2; 3 AND 4)</scope>
    <source>
        <tissue>Thalamus</tissue>
    </source>
</reference>
<reference key="10">
    <citation type="submission" date="2005-04" db="EMBL/GenBank/DDBJ databases">
        <authorList>
            <person name="Suzuki Y."/>
            <person name="Sugano S."/>
            <person name="Totoki Y."/>
            <person name="Toyoda A."/>
            <person name="Takeda T."/>
            <person name="Sakaki Y."/>
            <person name="Tanaka A."/>
            <person name="Yokoyama S."/>
        </authorList>
    </citation>
    <scope>NUCLEOTIDE SEQUENCE [LARGE SCALE MRNA] (ISOFORM 1)</scope>
    <scope>VARIANT LEU-282</scope>
    <source>
        <tissue>Dermoid cancer</tissue>
    </source>
</reference>
<reference key="11">
    <citation type="journal article" date="2005" name="Nature">
        <title>The DNA sequence of the human X chromosome.</title>
        <authorList>
            <person name="Ross M.T."/>
            <person name="Grafham D.V."/>
            <person name="Coffey A.J."/>
            <person name="Scherer S."/>
            <person name="McLay K."/>
            <person name="Muzny D."/>
            <person name="Platzer M."/>
            <person name="Howell G.R."/>
            <person name="Burrows C."/>
            <person name="Bird C.P."/>
            <person name="Frankish A."/>
            <person name="Lovell F.L."/>
            <person name="Howe K.L."/>
            <person name="Ashurst J.L."/>
            <person name="Fulton R.S."/>
            <person name="Sudbrak R."/>
            <person name="Wen G."/>
            <person name="Jones M.C."/>
            <person name="Hurles M.E."/>
            <person name="Andrews T.D."/>
            <person name="Scott C.E."/>
            <person name="Searle S."/>
            <person name="Ramser J."/>
            <person name="Whittaker A."/>
            <person name="Deadman R."/>
            <person name="Carter N.P."/>
            <person name="Hunt S.E."/>
            <person name="Chen R."/>
            <person name="Cree A."/>
            <person name="Gunaratne P."/>
            <person name="Havlak P."/>
            <person name="Hodgson A."/>
            <person name="Metzker M.L."/>
            <person name="Richards S."/>
            <person name="Scott G."/>
            <person name="Steffen D."/>
            <person name="Sodergren E."/>
            <person name="Wheeler D.A."/>
            <person name="Worley K.C."/>
            <person name="Ainscough R."/>
            <person name="Ambrose K.D."/>
            <person name="Ansari-Lari M.A."/>
            <person name="Aradhya S."/>
            <person name="Ashwell R.I."/>
            <person name="Babbage A.K."/>
            <person name="Bagguley C.L."/>
            <person name="Ballabio A."/>
            <person name="Banerjee R."/>
            <person name="Barker G.E."/>
            <person name="Barlow K.F."/>
            <person name="Barrett I.P."/>
            <person name="Bates K.N."/>
            <person name="Beare D.M."/>
            <person name="Beasley H."/>
            <person name="Beasley O."/>
            <person name="Beck A."/>
            <person name="Bethel G."/>
            <person name="Blechschmidt K."/>
            <person name="Brady N."/>
            <person name="Bray-Allen S."/>
            <person name="Bridgeman A.M."/>
            <person name="Brown A.J."/>
            <person name="Brown M.J."/>
            <person name="Bonnin D."/>
            <person name="Bruford E.A."/>
            <person name="Buhay C."/>
            <person name="Burch P."/>
            <person name="Burford D."/>
            <person name="Burgess J."/>
            <person name="Burrill W."/>
            <person name="Burton J."/>
            <person name="Bye J.M."/>
            <person name="Carder C."/>
            <person name="Carrel L."/>
            <person name="Chako J."/>
            <person name="Chapman J.C."/>
            <person name="Chavez D."/>
            <person name="Chen E."/>
            <person name="Chen G."/>
            <person name="Chen Y."/>
            <person name="Chen Z."/>
            <person name="Chinault C."/>
            <person name="Ciccodicola A."/>
            <person name="Clark S.Y."/>
            <person name="Clarke G."/>
            <person name="Clee C.M."/>
            <person name="Clegg S."/>
            <person name="Clerc-Blankenburg K."/>
            <person name="Clifford K."/>
            <person name="Cobley V."/>
            <person name="Cole C.G."/>
            <person name="Conquer J.S."/>
            <person name="Corby N."/>
            <person name="Connor R.E."/>
            <person name="David R."/>
            <person name="Davies J."/>
            <person name="Davis C."/>
            <person name="Davis J."/>
            <person name="Delgado O."/>
            <person name="Deshazo D."/>
            <person name="Dhami P."/>
            <person name="Ding Y."/>
            <person name="Dinh H."/>
            <person name="Dodsworth S."/>
            <person name="Draper H."/>
            <person name="Dugan-Rocha S."/>
            <person name="Dunham A."/>
            <person name="Dunn M."/>
            <person name="Durbin K.J."/>
            <person name="Dutta I."/>
            <person name="Eades T."/>
            <person name="Ellwood M."/>
            <person name="Emery-Cohen A."/>
            <person name="Errington H."/>
            <person name="Evans K.L."/>
            <person name="Faulkner L."/>
            <person name="Francis F."/>
            <person name="Frankland J."/>
            <person name="Fraser A.E."/>
            <person name="Galgoczy P."/>
            <person name="Gilbert J."/>
            <person name="Gill R."/>
            <person name="Gloeckner G."/>
            <person name="Gregory S.G."/>
            <person name="Gribble S."/>
            <person name="Griffiths C."/>
            <person name="Grocock R."/>
            <person name="Gu Y."/>
            <person name="Gwilliam R."/>
            <person name="Hamilton C."/>
            <person name="Hart E.A."/>
            <person name="Hawes A."/>
            <person name="Heath P.D."/>
            <person name="Heitmann K."/>
            <person name="Hennig S."/>
            <person name="Hernandez J."/>
            <person name="Hinzmann B."/>
            <person name="Ho S."/>
            <person name="Hoffs M."/>
            <person name="Howden P.J."/>
            <person name="Huckle E.J."/>
            <person name="Hume J."/>
            <person name="Hunt P.J."/>
            <person name="Hunt A.R."/>
            <person name="Isherwood J."/>
            <person name="Jacob L."/>
            <person name="Johnson D."/>
            <person name="Jones S."/>
            <person name="de Jong P.J."/>
            <person name="Joseph S.S."/>
            <person name="Keenan S."/>
            <person name="Kelly S."/>
            <person name="Kershaw J.K."/>
            <person name="Khan Z."/>
            <person name="Kioschis P."/>
            <person name="Klages S."/>
            <person name="Knights A.J."/>
            <person name="Kosiura A."/>
            <person name="Kovar-Smith C."/>
            <person name="Laird G.K."/>
            <person name="Langford C."/>
            <person name="Lawlor S."/>
            <person name="Leversha M."/>
            <person name="Lewis L."/>
            <person name="Liu W."/>
            <person name="Lloyd C."/>
            <person name="Lloyd D.M."/>
            <person name="Loulseged H."/>
            <person name="Loveland J.E."/>
            <person name="Lovell J.D."/>
            <person name="Lozado R."/>
            <person name="Lu J."/>
            <person name="Lyne R."/>
            <person name="Ma J."/>
            <person name="Maheshwari M."/>
            <person name="Matthews L.H."/>
            <person name="McDowall J."/>
            <person name="McLaren S."/>
            <person name="McMurray A."/>
            <person name="Meidl P."/>
            <person name="Meitinger T."/>
            <person name="Milne S."/>
            <person name="Miner G."/>
            <person name="Mistry S.L."/>
            <person name="Morgan M."/>
            <person name="Morris S."/>
            <person name="Mueller I."/>
            <person name="Mullikin J.C."/>
            <person name="Nguyen N."/>
            <person name="Nordsiek G."/>
            <person name="Nyakatura G."/>
            <person name="O'dell C.N."/>
            <person name="Okwuonu G."/>
            <person name="Palmer S."/>
            <person name="Pandian R."/>
            <person name="Parker D."/>
            <person name="Parrish J."/>
            <person name="Pasternak S."/>
            <person name="Patel D."/>
            <person name="Pearce A.V."/>
            <person name="Pearson D.M."/>
            <person name="Pelan S.E."/>
            <person name="Perez L."/>
            <person name="Porter K.M."/>
            <person name="Ramsey Y."/>
            <person name="Reichwald K."/>
            <person name="Rhodes S."/>
            <person name="Ridler K.A."/>
            <person name="Schlessinger D."/>
            <person name="Schueler M.G."/>
            <person name="Sehra H.K."/>
            <person name="Shaw-Smith C."/>
            <person name="Shen H."/>
            <person name="Sheridan E.M."/>
            <person name="Shownkeen R."/>
            <person name="Skuce C.D."/>
            <person name="Smith M.L."/>
            <person name="Sotheran E.C."/>
            <person name="Steingruber H.E."/>
            <person name="Steward C.A."/>
            <person name="Storey R."/>
            <person name="Swann R.M."/>
            <person name="Swarbreck D."/>
            <person name="Tabor P.E."/>
            <person name="Taudien S."/>
            <person name="Taylor T."/>
            <person name="Teague B."/>
            <person name="Thomas K."/>
            <person name="Thorpe A."/>
            <person name="Timms K."/>
            <person name="Tracey A."/>
            <person name="Trevanion S."/>
            <person name="Tromans A.C."/>
            <person name="d'Urso M."/>
            <person name="Verduzco D."/>
            <person name="Villasana D."/>
            <person name="Waldron L."/>
            <person name="Wall M."/>
            <person name="Wang Q."/>
            <person name="Warren J."/>
            <person name="Warry G.L."/>
            <person name="Wei X."/>
            <person name="West A."/>
            <person name="Whitehead S.L."/>
            <person name="Whiteley M.N."/>
            <person name="Wilkinson J.E."/>
            <person name="Willey D.L."/>
            <person name="Williams G."/>
            <person name="Williams L."/>
            <person name="Williamson A."/>
            <person name="Williamson H."/>
            <person name="Wilming L."/>
            <person name="Woodmansey R.L."/>
            <person name="Wray P.W."/>
            <person name="Yen J."/>
            <person name="Zhang J."/>
            <person name="Zhou J."/>
            <person name="Zoghbi H."/>
            <person name="Zorilla S."/>
            <person name="Buck D."/>
            <person name="Reinhardt R."/>
            <person name="Poustka A."/>
            <person name="Rosenthal A."/>
            <person name="Lehrach H."/>
            <person name="Meindl A."/>
            <person name="Minx P.J."/>
            <person name="Hillier L.W."/>
            <person name="Willard H.F."/>
            <person name="Wilson R.K."/>
            <person name="Waterston R.H."/>
            <person name="Rice C.M."/>
            <person name="Vaudin M."/>
            <person name="Coulson A."/>
            <person name="Nelson D.L."/>
            <person name="Weinstock G."/>
            <person name="Sulston J.E."/>
            <person name="Durbin R.M."/>
            <person name="Hubbard T."/>
            <person name="Gibbs R.A."/>
            <person name="Beck S."/>
            <person name="Rogers J."/>
            <person name="Bentley D.R."/>
        </authorList>
    </citation>
    <scope>NUCLEOTIDE SEQUENCE [LARGE SCALE GENOMIC DNA]</scope>
</reference>
<reference key="12">
    <citation type="submission" date="2005-07" db="EMBL/GenBank/DDBJ databases">
        <authorList>
            <person name="Mural R.J."/>
            <person name="Istrail S."/>
            <person name="Sutton G.G."/>
            <person name="Florea L."/>
            <person name="Halpern A.L."/>
            <person name="Mobarry C.M."/>
            <person name="Lippert R."/>
            <person name="Walenz B."/>
            <person name="Shatkay H."/>
            <person name="Dew I."/>
            <person name="Miller J.R."/>
            <person name="Flanigan M.J."/>
            <person name="Edwards N.J."/>
            <person name="Bolanos R."/>
            <person name="Fasulo D."/>
            <person name="Halldorsson B.V."/>
            <person name="Hannenhalli S."/>
            <person name="Turner R."/>
            <person name="Yooseph S."/>
            <person name="Lu F."/>
            <person name="Nusskern D.R."/>
            <person name="Shue B.C."/>
            <person name="Zheng X.H."/>
            <person name="Zhong F."/>
            <person name="Delcher A.L."/>
            <person name="Huson D.H."/>
            <person name="Kravitz S.A."/>
            <person name="Mouchard L."/>
            <person name="Reinert K."/>
            <person name="Remington K.A."/>
            <person name="Clark A.G."/>
            <person name="Waterman M.S."/>
            <person name="Eichler E.E."/>
            <person name="Adams M.D."/>
            <person name="Hunkapiller M.W."/>
            <person name="Myers E.W."/>
            <person name="Venter J.C."/>
        </authorList>
    </citation>
    <scope>NUCLEOTIDE SEQUENCE [LARGE SCALE GENOMIC DNA]</scope>
</reference>
<reference key="13">
    <citation type="journal article" date="2004" name="Genome Res.">
        <title>The status, quality, and expansion of the NIH full-length cDNA project: the Mammalian Gene Collection (MGC).</title>
        <authorList>
            <consortium name="The MGC Project Team"/>
        </authorList>
    </citation>
    <scope>NUCLEOTIDE SEQUENCE [LARGE SCALE MRNA] (ISOFORM 1)</scope>
    <source>
        <tissue>Muscle</tissue>
    </source>
</reference>
<reference key="14">
    <citation type="journal article" date="2013" name="Anal. Biochem.">
        <title>Experimental determination of organelle targeting-peptide cleavage sites using transient expression of green fluorescent protein translational fusions.</title>
        <authorList>
            <person name="Candat A."/>
            <person name="Poupart P."/>
            <person name="Andrieu J.P."/>
            <person name="Chevrollier A."/>
            <person name="Reynier P."/>
            <person name="Rogniaux H."/>
            <person name="Avelange-Macherel M.H."/>
            <person name="Macherel D."/>
        </authorList>
    </citation>
    <scope>PROTEIN SEQUENCE OF 31-37</scope>
</reference>
<reference key="15">
    <citation type="journal article" date="1999" name="Proc. Natl. Acad. Sci. U.S.A.">
        <title>X chromosome evidence for ancient human histories.</title>
        <authorList>
            <person name="Harris E.E."/>
            <person name="Hey J."/>
        </authorList>
    </citation>
    <scope>NUCLEOTIDE SEQUENCE [GENOMIC DNA] OF 202-336</scope>
    <scope>VARIANT LEU-282</scope>
</reference>
<reference key="16">
    <citation type="journal article" date="1992" name="J. Inherit. Metab. Dis.">
        <title>Mutation of E1 alpha gene in a female patient with pyruvate dehydrogenase deficiency due to rapid degradation of E1 protein.</title>
        <authorList>
            <person name="Ito M."/>
            <person name="Huq A.H."/>
            <person name="Naito E."/>
            <person name="Saijo T."/>
            <person name="Takeda E."/>
            <person name="Kuroda Y."/>
        </authorList>
    </citation>
    <scope>INVOLVEMENT IN PDHAD</scope>
</reference>
<reference key="17">
    <citation type="journal article" date="1995" name="J. Biol. Chem.">
        <title>Mutagenesis studies of the phosphorylation sites of recombinant human pyruvate dehydrogenase. Site-specific regulation.</title>
        <authorList>
            <person name="Korotchkina L.G."/>
            <person name="Patel M.S."/>
        </authorList>
    </citation>
    <scope>CATALYTIC ACTIVITY</scope>
    <scope>FUNCTION</scope>
    <scope>ACTIVITY REGULATION</scope>
    <scope>MUTAGENESIS OF SER-232; SER-293 AND SER-300</scope>
</reference>
<reference key="18">
    <citation type="journal article" date="2001" name="J. Biol. Chem.">
        <title>Site specificity of four pyruvate dehydrogenase kinase isoenzymes toward the three phosphorylation sites of human pyruvate dehydrogenase.</title>
        <authorList>
            <person name="Korotchkina L.G."/>
            <person name="Patel M.S."/>
        </authorList>
    </citation>
    <scope>PHOSPHORYLATION AT SER-232; SER-293 AND SER-300</scope>
</reference>
<reference key="19">
    <citation type="journal article" date="2004" name="J. Biol. Chem.">
        <title>Organization of the cores of the mammalian pyruvate dehydrogenase complex formed by E2 and E2 plus the E3-binding protein and their capacities to bind the E1 and E3 components.</title>
        <authorList>
            <person name="Hiromasa Y."/>
            <person name="Fujisawa T."/>
            <person name="Aso Y."/>
            <person name="Roche T.E."/>
        </authorList>
    </citation>
    <scope>SUBUNIT</scope>
</reference>
<reference key="20">
    <citation type="journal article" date="2006" name="Cell">
        <title>Global, in vivo, and site-specific phosphorylation dynamics in signaling networks.</title>
        <authorList>
            <person name="Olsen J.V."/>
            <person name="Blagoev B."/>
            <person name="Gnad F."/>
            <person name="Macek B."/>
            <person name="Kumar C."/>
            <person name="Mortensen P."/>
            <person name="Mann M."/>
        </authorList>
    </citation>
    <scope>IDENTIFICATION BY MASS SPECTROMETRY [LARGE SCALE ANALYSIS]</scope>
    <source>
        <tissue>Cervix carcinoma</tissue>
    </source>
</reference>
<reference key="21">
    <citation type="journal article" date="2008" name="J. Proteome Res.">
        <title>Phosphoproteome of resting human platelets.</title>
        <authorList>
            <person name="Zahedi R.P."/>
            <person name="Lewandrowski U."/>
            <person name="Wiesner J."/>
            <person name="Wortelkamp S."/>
            <person name="Moebius J."/>
            <person name="Schuetz C."/>
            <person name="Walter U."/>
            <person name="Gambaryan S."/>
            <person name="Sickmann A."/>
        </authorList>
    </citation>
    <scope>IDENTIFICATION BY MASS SPECTROMETRY [LARGE SCALE ANALYSIS]</scope>
    <source>
        <tissue>Platelet</tissue>
    </source>
</reference>
<reference key="22">
    <citation type="journal article" date="2008" name="Mol. Cell">
        <title>Kinase-selective enrichment enables quantitative phosphoproteomics of the kinome across the cell cycle.</title>
        <authorList>
            <person name="Daub H."/>
            <person name="Olsen J.V."/>
            <person name="Bairlein M."/>
            <person name="Gnad F."/>
            <person name="Oppermann F.S."/>
            <person name="Korner R."/>
            <person name="Greff Z."/>
            <person name="Keri G."/>
            <person name="Stemmann O."/>
            <person name="Mann M."/>
        </authorList>
    </citation>
    <scope>IDENTIFICATION BY MASS SPECTROMETRY [LARGE SCALE ANALYSIS]</scope>
    <source>
        <tissue>Cervix carcinoma</tissue>
    </source>
</reference>
<reference key="23">
    <citation type="journal article" date="2008" name="Proc. Natl. Acad. Sci. U.S.A.">
        <title>A quantitative atlas of mitotic phosphorylation.</title>
        <authorList>
            <person name="Dephoure N."/>
            <person name="Zhou C."/>
            <person name="Villen J."/>
            <person name="Beausoleil S.A."/>
            <person name="Bakalarski C.E."/>
            <person name="Elledge S.J."/>
            <person name="Gygi S.P."/>
        </authorList>
    </citation>
    <scope>IDENTIFICATION BY MASS SPECTROMETRY [LARGE SCALE ANALYSIS]</scope>
    <source>
        <tissue>Cervix carcinoma</tissue>
    </source>
</reference>
<reference key="24">
    <citation type="journal article" date="2009" name="Anal. Chem.">
        <title>Lys-N and trypsin cover complementary parts of the phosphoproteome in a refined SCX-based approach.</title>
        <authorList>
            <person name="Gauci S."/>
            <person name="Helbig A.O."/>
            <person name="Slijper M."/>
            <person name="Krijgsveld J."/>
            <person name="Heck A.J."/>
            <person name="Mohammed S."/>
        </authorList>
    </citation>
    <scope>IDENTIFICATION BY MASS SPECTROMETRY [LARGE SCALE ANALYSIS]</scope>
</reference>
<reference key="25">
    <citation type="journal article" date="2009" name="Science">
        <title>Lysine acetylation targets protein complexes and co-regulates major cellular functions.</title>
        <authorList>
            <person name="Choudhary C."/>
            <person name="Kumar C."/>
            <person name="Gnad F."/>
            <person name="Nielsen M.L."/>
            <person name="Rehman M."/>
            <person name="Walther T.C."/>
            <person name="Olsen J.V."/>
            <person name="Mann M."/>
        </authorList>
    </citation>
    <scope>ACETYLATION [LARGE SCALE ANALYSIS] AT LYS-321</scope>
    <scope>IDENTIFICATION BY MASS SPECTROMETRY [LARGE SCALE ANALYSIS]</scope>
</reference>
<reference key="26">
    <citation type="journal article" date="2010" name="Sci. Signal.">
        <title>Quantitative phosphoproteomics reveals widespread full phosphorylation site occupancy during mitosis.</title>
        <authorList>
            <person name="Olsen J.V."/>
            <person name="Vermeulen M."/>
            <person name="Santamaria A."/>
            <person name="Kumar C."/>
            <person name="Miller M.L."/>
            <person name="Jensen L.J."/>
            <person name="Gnad F."/>
            <person name="Cox J."/>
            <person name="Jensen T.S."/>
            <person name="Nigg E.A."/>
            <person name="Brunak S."/>
            <person name="Mann M."/>
        </authorList>
    </citation>
    <scope>PHOSPHORYLATION [LARGE SCALE ANALYSIS] AT SER-232</scope>
    <scope>IDENTIFICATION BY MASS SPECTROMETRY [LARGE SCALE ANALYSIS]</scope>
    <source>
        <tissue>Cervix carcinoma</tissue>
    </source>
</reference>
<reference key="27">
    <citation type="journal article" date="2011" name="BMC Syst. Biol.">
        <title>Initial characterization of the human central proteome.</title>
        <authorList>
            <person name="Burkard T.R."/>
            <person name="Planyavsky M."/>
            <person name="Kaupe I."/>
            <person name="Breitwieser F.P."/>
            <person name="Buerckstuemmer T."/>
            <person name="Bennett K.L."/>
            <person name="Superti-Furga G."/>
            <person name="Colinge J."/>
        </authorList>
    </citation>
    <scope>IDENTIFICATION BY MASS SPECTROMETRY [LARGE SCALE ANALYSIS]</scope>
</reference>
<reference key="28">
    <citation type="journal article" date="2011" name="Sci. Signal.">
        <title>System-wide temporal characterization of the proteome and phosphoproteome of human embryonic stem cell differentiation.</title>
        <authorList>
            <person name="Rigbolt K.T."/>
            <person name="Prokhorova T.A."/>
            <person name="Akimov V."/>
            <person name="Henningsen J."/>
            <person name="Johansen P.T."/>
            <person name="Kratchmarova I."/>
            <person name="Kassem M."/>
            <person name="Mann M."/>
            <person name="Olsen J.V."/>
            <person name="Blagoev B."/>
        </authorList>
    </citation>
    <scope>PHOSPHORYLATION [LARGE SCALE ANALYSIS] AT SER-232</scope>
    <scope>IDENTIFICATION BY MASS SPECTROMETRY [LARGE SCALE ANALYSIS]</scope>
</reference>
<reference key="29">
    <citation type="journal article" date="2013" name="J. Proteome Res.">
        <title>Toward a comprehensive characterization of a human cancer cell phosphoproteome.</title>
        <authorList>
            <person name="Zhou H."/>
            <person name="Di Palma S."/>
            <person name="Preisinger C."/>
            <person name="Peng M."/>
            <person name="Polat A.N."/>
            <person name="Heck A.J."/>
            <person name="Mohammed S."/>
        </authorList>
    </citation>
    <scope>PHOSPHORYLATION [LARGE SCALE ANALYSIS] AT SER-232</scope>
    <scope>IDENTIFICATION BY MASS SPECTROMETRY [LARGE SCALE ANALYSIS]</scope>
    <source>
        <tissue>Cervix carcinoma</tissue>
        <tissue>Erythroleukemia</tissue>
    </source>
</reference>
<reference key="30">
    <citation type="journal article" date="2014" name="J. Proteomics">
        <title>An enzyme assisted RP-RPLC approach for in-depth analysis of human liver phosphoproteome.</title>
        <authorList>
            <person name="Bian Y."/>
            <person name="Song C."/>
            <person name="Cheng K."/>
            <person name="Dong M."/>
            <person name="Wang F."/>
            <person name="Huang J."/>
            <person name="Sun D."/>
            <person name="Wang L."/>
            <person name="Ye M."/>
            <person name="Zou H."/>
        </authorList>
    </citation>
    <scope>IDENTIFICATION BY MASS SPECTROMETRY [LARGE SCALE ANALYSIS]</scope>
    <source>
        <tissue>Liver</tissue>
    </source>
</reference>
<reference key="31">
    <citation type="journal article" date="2015" name="Proteomics">
        <title>N-terminome analysis of the human mitochondrial proteome.</title>
        <authorList>
            <person name="Vaca Jacome A.S."/>
            <person name="Rabilloud T."/>
            <person name="Schaeffer-Reiss C."/>
            <person name="Rompais M."/>
            <person name="Ayoub D."/>
            <person name="Lane L."/>
            <person name="Bairoch A."/>
            <person name="Van Dorsselaer A."/>
            <person name="Carapito C."/>
        </authorList>
    </citation>
    <scope>IDENTIFICATION BY MASS SPECTROMETRY [LARGE SCALE ANALYSIS]</scope>
</reference>
<reference evidence="36" key="32">
    <citation type="journal article" date="2003" name="J. Biol. Chem.">
        <title>Structural basis for flip-flop action of thiamin pyrophosphate-dependent enzymes revealed by human pyruvate dehydrogenase.</title>
        <authorList>
            <person name="Ciszak E.M."/>
            <person name="Korotchkina L.G."/>
            <person name="Dominiak P.M."/>
            <person name="Sidhu S."/>
            <person name="Patel M.S."/>
        </authorList>
    </citation>
    <scope>X-RAY CRYSTALLOGRAPHY (1.95 ANGSTROMS) OF 30-309 IN COMPLEX WITH MG(2+) AND THIAMINE PYROPHOSPHATE</scope>
    <scope>COFACTOR</scope>
    <scope>SUBUNIT</scope>
</reference>
<reference evidence="37" key="33">
    <citation type="journal article" date="2007" name="Biochemistry">
        <title>Phosphorylation of serine 264 impedes active site accessibility in the E1 component of the human pyruvate dehydrogenase multienzyme complex.</title>
        <authorList>
            <person name="Seifert F."/>
            <person name="Ciszak E."/>
            <person name="Korotchkina L."/>
            <person name="Golbik R."/>
            <person name="Spinka M."/>
            <person name="Dominiak P."/>
            <person name="Sidhu S."/>
            <person name="Brauer J."/>
            <person name="Patel M.S."/>
            <person name="Tittmann K."/>
        </authorList>
    </citation>
    <scope>X-RAY CRYSTALLOGRAPHY (1.9 ANGSTROMS) OF 30-390 IN COMPLEX WITH MG(2+) AND THIAMINE DIPHOSPHATE</scope>
    <scope>CATALYTIC ACTIVITY</scope>
    <scope>ACTIVITY REGULATION</scope>
    <scope>SUBUNIT</scope>
    <scope>MUTAGENESIS OF SER-293</scope>
    <scope>PHOSPHORYLATION AT SER-293</scope>
</reference>
<reference evidence="38 39 40 41 42" key="34">
    <citation type="journal article" date="2008" name="Structure">
        <title>Structural basis for inactivation of the human pyruvate dehydrogenase complex by phosphorylation: role of disordered phosphorylation loops.</title>
        <authorList>
            <person name="Kato M."/>
            <person name="Wynn R.M."/>
            <person name="Chuang J.L."/>
            <person name="Tso S.C."/>
            <person name="Machius M."/>
            <person name="Li J."/>
            <person name="Chuang D.T."/>
        </authorList>
    </citation>
    <scope>X-RAY CRYSTALLOGRAPHY (1.98 ANGSTROMS) OF 30-390 IN COMPLEX WITH MG(2+) AND THIAMINE DIPHOSPHATE</scope>
    <scope>FUNCTION</scope>
    <scope>CATALYTIC ACTIVITY</scope>
    <scope>COFACTOR</scope>
    <scope>ACTIVITY REGULATION</scope>
    <scope>BIOPHYSICOCHEMICAL PROPERTIES</scope>
    <scope>SUBUNIT</scope>
    <scope>PHOSPHORYLATION AT SER-293 AND SER-300 BY PDK4</scope>
</reference>
<reference evidence="43 44" key="35">
    <citation type="journal article" date="2018" name="J. Biol. Chem.">
        <title>Pyruvate dehydrogenase complex deficiency is linked to regulatory loop disorder in the alphaV138M variant of human pyruvate dehydrogenase.</title>
        <authorList>
            <person name="Whitley M.J."/>
            <person name="Arjunan P."/>
            <person name="Nemeria N.S."/>
            <person name="Korotchkina L.G."/>
            <person name="Park Y.H."/>
            <person name="Patel M.S."/>
            <person name="Jordan F."/>
            <person name="Furey W."/>
        </authorList>
    </citation>
    <scope>X-RAY CRYSTALLOGRAPHY (2.69 ANGSTROMS) OF 30-390 OF VARIANT PDHAD MET-167 IN COMPLEX WITH MG(2+) AND THIAMINE DIPHOSPHATE AND OF WILD-TYPE IN COMPLEX WITH MG(2+) AND SUBSTRATE ANALOG</scope>
    <scope>SUBUNIT</scope>
    <scope>CHARACTERIZATION OF VARIANT PDHAD MET-167</scope>
</reference>
<reference key="36">
    <citation type="journal article" date="1992" name="Hum. Mutat.">
        <title>Mutations and polymorphisms in the pyruvate dehydrogenase E1 alpha gene.</title>
        <authorList>
            <person name="Dahl H.-H.M."/>
            <person name="Brown G.K."/>
            <person name="Brown R.M."/>
            <person name="Hansen L.L."/>
            <person name="Kerr D.S."/>
            <person name="Wexler I.D."/>
            <person name="Patel M.S."/>
            <person name="de Meirleir L."/>
            <person name="Lissens W."/>
            <person name="Chun K."/>
            <person name="McKay N."/>
            <person name="Robinson B.H."/>
        </authorList>
    </citation>
    <scope>REVIEW ON VARIANTS</scope>
</reference>
<reference key="37">
    <citation type="journal article" date="1991" name="J. Inherit. Metab. Dis.">
        <title>Characterization of the mutations in three patients with pyruvate dehydrogenase E1 alpha deficiency.</title>
        <authorList>
            <person name="Hansen L.L."/>
            <person name="Brown G.K."/>
            <person name="Kirby D.M."/>
            <person name="Dahl H.-H.M."/>
        </authorList>
    </citation>
    <scope>VARIANTS PDHAD LYS-313 DEL AND HIS-378</scope>
</reference>
<reference key="38">
    <citation type="journal article" date="1992" name="Hum. Genet.">
        <title>Pyruvate dehydrogenase (PDH) deficiency caused by a 21-base pair insertion mutation in the E1 alpha subunit.</title>
        <authorList>
            <person name="De Meirleir L."/>
            <person name="Lissens W."/>
            <person name="Vamos E."/>
            <person name="Liebaers I."/>
        </authorList>
    </citation>
    <scope>VARIANT PDHAD ASP-SER-TYR-ARG-THR-ARG-GLU-305 INS</scope>
</reference>
<reference key="39">
    <citation type="journal article" date="1992" name="J. Inherit. Metab. Dis.">
        <title>X-linked pyruvate dehydrogenase E1 alpha subunit deficiency in heterozygous females: variable manifestation of the same mutation.</title>
        <authorList>
            <person name="Dahl H.-H.M."/>
            <person name="Hansen L.L."/>
            <person name="Brown R.M."/>
            <person name="Danks D.M."/>
            <person name="Rogers J.G."/>
            <person name="Brown G.K."/>
        </authorList>
    </citation>
    <scope>VARIANT PDHAD CYS-302</scope>
</reference>
<reference key="40">
    <citation type="journal article" date="1993" name="Ann. Neurol.">
        <title>Molecular genetic characterization of an X-linked form of Leigh's syndrome.</title>
        <authorList>
            <person name="Matthews P.M."/>
            <person name="Marchington D.R."/>
            <person name="Squier M."/>
            <person name="Land J."/>
            <person name="Brown R.M."/>
            <person name="Brown G.K."/>
        </authorList>
    </citation>
    <scope>VARIANT PDHAD ALA-258</scope>
</reference>
<reference key="41">
    <citation type="journal article" date="1993" name="Hum. Mol. Genet.">
        <title>Mutations in the X-linked E1 alpha subunit of pyruvate dehydrogenase leading to deficiency of the pyruvate dehydrogenase complex.</title>
        <authorList>
            <person name="Chun K."/>
            <person name="McKay N."/>
            <person name="Petrova-Benedict R."/>
            <person name="Robinson B.H."/>
        </authorList>
    </citation>
    <scope>VARIANTS PDHAD MET-167; THR-199; ALA-231; GLY-263 AND LEU-292</scope>
</reference>
<reference key="42">
    <citation type="journal article" date="1994" name="Brain">
        <title>Pyruvate dehydrogenase deficiency. Clinical presentation and molecular genetic characterization of five new patients.</title>
        <authorList>
            <person name="Matthews P.M."/>
            <person name="Brown R.M."/>
            <person name="Otero L.J."/>
            <person name="Marchington D.R."/>
            <person name="LeGris M."/>
            <person name="Howes R."/>
            <person name="Meadows L.S."/>
            <person name="Shevell M."/>
            <person name="Scriver C.R."/>
            <person name="Brown G.K."/>
        </authorList>
    </citation>
    <scope>VARIANTS PDHAD ASN-243; ASN-315 AND HIS-378</scope>
    <scope>VARIANT LEU-282</scope>
</reference>
<reference key="43">
    <citation type="journal article" date="1994" name="Hum. Mol. Genet.">
        <title>Pyruvate dehydrogenase deficiency caused by a 33 base pair duplication in the PDH E1 alpha subunit.</title>
        <authorList>
            <person name="Hansen L.L."/>
            <person name="Horn N."/>
            <person name="Dahl H.-H.M."/>
            <person name="Kruse T.A."/>
        </authorList>
    </citation>
    <scope>VARIANT PDHAD PRO-PRO-HIS-SER-TYR-ARG-THR-ARG-GLU-GLU-ILE-307 INS</scope>
</reference>
<reference key="44">
    <citation type="journal article" date="1994" name="Hum. Mutat.">
        <title>Pyruvate dehydrogenase deficiency in a male caused by a point mutation (F205L) in the E1 alpha subunit.</title>
        <authorList>
            <person name="Dahl H.-H.M."/>
            <person name="Brown G.K."/>
        </authorList>
    </citation>
    <scope>VARIANT PDHAD LEU-205</scope>
</reference>
<reference key="45">
    <citation type="journal article" date="1994" name="J. Inherit. Metab. Dis.">
        <title>Characterization of a point mutation in the pyruvate dehydrogenase E1 alpha gene from two boys with primary lactic acidaemia.</title>
        <authorList>
            <person name="Awata H."/>
            <person name="Endo F."/>
            <person name="Tanoue A."/>
            <person name="Kitano A."/>
            <person name="Matsuda I."/>
        </authorList>
    </citation>
    <scope>VARIANT PDHAD GLN-263</scope>
</reference>
<reference key="46">
    <citation type="journal article" date="1995" name="Am. J. Hum. Genet.">
        <title>Mutations in the X-linked E1 alpha subunit of pyruvate dehydrogenase: exon skipping, insertion of duplicate sequence, and missense mutations leading to the deficiency of the pyruvate dehydrogenase complex.</title>
        <authorList>
            <person name="Chun K."/>
            <person name="MacKay N."/>
            <person name="Petrova-Benedict R."/>
            <person name="Federico A."/>
            <person name="Fois A."/>
            <person name="Cole D.E.C."/>
            <person name="Robertson E."/>
            <person name="Robinson B.H."/>
        </authorList>
    </citation>
    <scope>VARIANTS PDHAD CYS-72; LEU-205; GLY-263; ARG-311 DEL AND HIS-378</scope>
</reference>
<reference key="47">
    <citation type="journal article" date="1995" name="Am. J. Hum. Genet.">
        <title>An amino acid substitution in the pyruvate dehydrogenase E1 alpha gene, affecting mitochondrial import of the precursor protein.</title>
        <authorList>
            <person name="Takakubo F."/>
            <person name="Cartwright P."/>
            <person name="Hoogenraad N."/>
            <person name="Thorburn D.R."/>
            <person name="Collins F."/>
            <person name="Lithgow T."/>
            <person name="Dahl H.-H.M."/>
        </authorList>
    </citation>
    <scope>VARIANT PDHAD PRO-10</scope>
</reference>
<reference key="48">
    <citation type="journal article" date="1995" name="Hum. Mol. Genet.">
        <title>Pyruvate dehydrogenase complex deficiency due to a point mutation (P188L) within the thiamine pyrophosphate binding loop of the E1 alpha subunit.</title>
        <authorList>
            <person name="Hemalatha S.G."/>
            <person name="Kerr D.S."/>
            <person name="Wexler I.D."/>
            <person name="Lusk M.M."/>
            <person name="Kaung M."/>
            <person name="Du Y."/>
            <person name="Kolli M."/>
            <person name="Schelper R.L."/>
            <person name="Patel M.S."/>
        </authorList>
    </citation>
    <scope>VARIANT PDHAD LEU-217</scope>
</reference>
<reference key="49">
    <citation type="journal article" date="1996" name="Hum. Mutat.">
        <title>Mutation analysis of the pyruvate dehydrogenase E1 alpha gene in eight patients with a pyruvate dehydrogenase complex deficiency.</title>
        <authorList>
            <person name="Lissens W."/>
            <person name="de Meirleir L."/>
            <person name="Seneca S."/>
            <person name="Benelli C."/>
            <person name="Marsac C."/>
            <person name="Poll-The B.T."/>
            <person name="Briones P."/>
            <person name="Ruitenbeek W."/>
            <person name="van Diggelen O."/>
            <person name="Chaigne D."/>
            <person name="Ramaekers V."/>
            <person name="Liebaers I."/>
        </authorList>
    </citation>
    <scope>VARIANTS PDHAD CYS-72; ASP-113; ARG-162; GLY-263; HIS-288 AND CYS-302</scope>
</reference>
<reference key="50">
    <citation type="journal article" date="1996" name="Hum. Mutat.">
        <title>Three new mutations of the pyruvate dehydrogenase alpha subunit: a point mutation (M181V), 3 bp deletion (-R282), and 16 bp insertion/frameshift (K358SVS--&gt;TVDQS).</title>
        <authorList>
            <person name="Tripatara A."/>
            <person name="Kerr D.S."/>
            <person name="Lusk M.M."/>
            <person name="Kolli M."/>
            <person name="Tan J."/>
            <person name="Patel M.S."/>
        </authorList>
    </citation>
    <scope>VARIANTS PDHAD VAL-210 AND ARG-311 DEL</scope>
</reference>
<reference key="51">
    <citation type="journal article" date="1997" name="J. Inherit. Metab. Dis.">
        <title>Biochemical and molecular analysis of an X-linked case of Leigh syndrome associated with thiamin-responsive pyruvate dehydrogenase deficiency.</title>
        <authorList>
            <person name="Naito E."/>
            <person name="Ito M."/>
            <person name="Yokota I."/>
            <person name="Saijo T."/>
            <person name="Matsuda J."/>
            <person name="Osaka H."/>
            <person name="Kimura S."/>
            <person name="Kuroda Y."/>
        </authorList>
    </citation>
    <scope>VARIANT PDHAD GLY-263</scope>
</reference>
<reference key="52">
    <citation type="journal article" date="1998" name="Hum. Mutat.">
        <title>Arginine 302 mutations in the pyruvate dehydrogenase E1alpha subunit gene: identification of further patients and in vitro demonstration of pathogenicity.</title>
        <authorList>
            <person name="Otero L.J."/>
            <person name="Brown R.M."/>
            <person name="Brown G.K."/>
        </authorList>
    </citation>
    <scope>VARIANTS PDHAD CYS-302 AND HIS-302</scope>
</reference>
<reference key="53">
    <citation type="journal article" date="2012" name="N. Engl. J. Med.">
        <title>Diagnostic exome sequencing in persons with severe intellectual disability.</title>
        <authorList>
            <person name="de Ligt J."/>
            <person name="Willemsen M.H."/>
            <person name="van Bon B.W."/>
            <person name="Kleefstra T."/>
            <person name="Yntema H.G."/>
            <person name="Kroes T."/>
            <person name="Vulto-van Silfhout A.T."/>
            <person name="Koolen D.A."/>
            <person name="de Vries P."/>
            <person name="Gilissen C."/>
            <person name="del Rosario M."/>
            <person name="Hoischen A."/>
            <person name="Scheffer H."/>
            <person name="de Vries B.B."/>
            <person name="Brunner H.G."/>
            <person name="Veltman J.A."/>
            <person name="Vissers L.E."/>
        </authorList>
    </citation>
    <scope>VARIANT THR-136</scope>
</reference>
<reference key="54">
    <citation type="journal article" date="2017" name="Hum. Mutat.">
        <title>Diagnostic targeted resequencing in 349 patients with drug-resistant pediatric epilepsies identifies causative mutations in 30 different genes.</title>
        <authorList>
            <consortium name="Clinical Study Group"/>
            <person name="Parrini E."/>
            <person name="Marini C."/>
            <person name="Mei D."/>
            <person name="Galuppi A."/>
            <person name="Cellini E."/>
            <person name="Pucatti D."/>
            <person name="Chiti L."/>
            <person name="Rutigliano D."/>
            <person name="Bianchini C."/>
            <person name="Virdo S."/>
            <person name="De Vita D."/>
            <person name="Bigoni S."/>
            <person name="Barba C."/>
            <person name="Mari F."/>
            <person name="Montomoli M."/>
            <person name="Pisano T."/>
            <person name="Rosati A."/>
            <person name="Guerrini R."/>
        </authorList>
    </citation>
    <scope>VARIANT PDHAD CYS-302</scope>
</reference>
<evidence type="ECO:0000250" key="1"/>
<evidence type="ECO:0000250" key="2">
    <source>
        <dbReference type="UniProtKB" id="P35486"/>
    </source>
</evidence>
<evidence type="ECO:0000269" key="3">
    <source>
    </source>
</evidence>
<evidence type="ECO:0000269" key="4">
    <source>
    </source>
</evidence>
<evidence type="ECO:0000269" key="5">
    <source>
    </source>
</evidence>
<evidence type="ECO:0000269" key="6">
    <source>
    </source>
</evidence>
<evidence type="ECO:0000269" key="7">
    <source>
    </source>
</evidence>
<evidence type="ECO:0000269" key="8">
    <source>
    </source>
</evidence>
<evidence type="ECO:0000269" key="9">
    <source>
    </source>
</evidence>
<evidence type="ECO:0000269" key="10">
    <source>
    </source>
</evidence>
<evidence type="ECO:0000269" key="11">
    <source>
    </source>
</evidence>
<evidence type="ECO:0000269" key="12">
    <source>
    </source>
</evidence>
<evidence type="ECO:0000269" key="13">
    <source>
    </source>
</evidence>
<evidence type="ECO:0000269" key="14">
    <source>
    </source>
</evidence>
<evidence type="ECO:0000269" key="15">
    <source>
    </source>
</evidence>
<evidence type="ECO:0000269" key="16">
    <source>
    </source>
</evidence>
<evidence type="ECO:0000269" key="17">
    <source>
    </source>
</evidence>
<evidence type="ECO:0000269" key="18">
    <source>
    </source>
</evidence>
<evidence type="ECO:0000269" key="19">
    <source>
    </source>
</evidence>
<evidence type="ECO:0000269" key="20">
    <source>
    </source>
</evidence>
<evidence type="ECO:0000269" key="21">
    <source>
    </source>
</evidence>
<evidence type="ECO:0000269" key="22">
    <source>
    </source>
</evidence>
<evidence type="ECO:0000269" key="23">
    <source>
    </source>
</evidence>
<evidence type="ECO:0000269" key="24">
    <source>
    </source>
</evidence>
<evidence type="ECO:0000269" key="25">
    <source>
    </source>
</evidence>
<evidence type="ECO:0000269" key="26">
    <source>
    </source>
</evidence>
<evidence type="ECO:0000269" key="27">
    <source>
    </source>
</evidence>
<evidence type="ECO:0000269" key="28">
    <source>
    </source>
</evidence>
<evidence type="ECO:0000269" key="29">
    <source>
    </source>
</evidence>
<evidence type="ECO:0000269" key="30">
    <source>
    </source>
</evidence>
<evidence type="ECO:0000269" key="31">
    <source ref="10"/>
</evidence>
<evidence type="ECO:0000303" key="32">
    <source>
    </source>
</evidence>
<evidence type="ECO:0000303" key="33">
    <source ref="8"/>
</evidence>
<evidence type="ECO:0000305" key="34"/>
<evidence type="ECO:0000305" key="35">
    <source>
    </source>
</evidence>
<evidence type="ECO:0007744" key="36">
    <source>
        <dbReference type="PDB" id="1NI4"/>
    </source>
</evidence>
<evidence type="ECO:0007744" key="37">
    <source>
        <dbReference type="PDB" id="2OZL"/>
    </source>
</evidence>
<evidence type="ECO:0007744" key="38">
    <source>
        <dbReference type="PDB" id="3EXE"/>
    </source>
</evidence>
<evidence type="ECO:0007744" key="39">
    <source>
        <dbReference type="PDB" id="3EXF"/>
    </source>
</evidence>
<evidence type="ECO:0007744" key="40">
    <source>
        <dbReference type="PDB" id="3EXG"/>
    </source>
</evidence>
<evidence type="ECO:0007744" key="41">
    <source>
        <dbReference type="PDB" id="3EXH"/>
    </source>
</evidence>
<evidence type="ECO:0007744" key="42">
    <source>
        <dbReference type="PDB" id="3EXI"/>
    </source>
</evidence>
<evidence type="ECO:0007744" key="43">
    <source>
        <dbReference type="PDB" id="6CER"/>
    </source>
</evidence>
<evidence type="ECO:0007744" key="44">
    <source>
        <dbReference type="PDB" id="6CFO"/>
    </source>
</evidence>
<evidence type="ECO:0007744" key="45">
    <source>
    </source>
</evidence>
<evidence type="ECO:0007744" key="46">
    <source>
    </source>
</evidence>
<evidence type="ECO:0007744" key="47">
    <source>
    </source>
</evidence>
<evidence type="ECO:0007744" key="48">
    <source>
    </source>
</evidence>
<evidence type="ECO:0007829" key="49">
    <source>
        <dbReference type="PDB" id="2OZL"/>
    </source>
</evidence>
<evidence type="ECO:0007829" key="50">
    <source>
        <dbReference type="PDB" id="3EXE"/>
    </source>
</evidence>
<evidence type="ECO:0007829" key="51">
    <source>
        <dbReference type="PDB" id="3EXF"/>
    </source>
</evidence>
<evidence type="ECO:0007829" key="52">
    <source>
        <dbReference type="PDB" id="3EXG"/>
    </source>
</evidence>
<name>ODPA_HUMAN</name>
<feature type="transit peptide" description="Mitochondrion" evidence="14">
    <location>
        <begin position="1"/>
        <end position="29"/>
    </location>
</feature>
<feature type="chain" id="PRO_0000020440" description="Pyruvate dehydrogenase E1 component subunit alpha, somatic form, mitochondrial">
    <location>
        <begin position="30"/>
        <end position="390"/>
    </location>
</feature>
<feature type="binding site" evidence="35 44">
    <location>
        <position position="92"/>
    </location>
    <ligand>
        <name>pyruvate</name>
        <dbReference type="ChEBI" id="CHEBI:15361"/>
    </ligand>
</feature>
<feature type="binding site" evidence="35 44">
    <location>
        <position position="118"/>
    </location>
    <ligand>
        <name>pyruvate</name>
        <dbReference type="ChEBI" id="CHEBI:15361"/>
    </ligand>
</feature>
<feature type="binding site" evidence="5 10 11 16 36 37 38 39 41 43">
    <location>
        <position position="118"/>
    </location>
    <ligand>
        <name>thiamine diphosphate</name>
        <dbReference type="ChEBI" id="CHEBI:58937"/>
        <note>ligand shared with beta subunit</note>
    </ligand>
</feature>
<feature type="binding site" evidence="35 44">
    <location>
        <position position="119"/>
    </location>
    <ligand>
        <name>pyruvate</name>
        <dbReference type="ChEBI" id="CHEBI:15361"/>
    </ligand>
</feature>
<feature type="binding site" evidence="5 10 11 16 36 37 38 39 41 43">
    <location>
        <position position="119"/>
    </location>
    <ligand>
        <name>thiamine diphosphate</name>
        <dbReference type="ChEBI" id="CHEBI:58937"/>
        <note>ligand shared with beta subunit</note>
    </ligand>
</feature>
<feature type="binding site" evidence="35 44">
    <location>
        <position position="157"/>
    </location>
    <ligand>
        <name>pyruvate</name>
        <dbReference type="ChEBI" id="CHEBI:15361"/>
    </ligand>
</feature>
<feature type="binding site" evidence="35 44">
    <location>
        <position position="165"/>
    </location>
    <ligand>
        <name>pyruvate</name>
        <dbReference type="ChEBI" id="CHEBI:15361"/>
    </ligand>
</feature>
<feature type="binding site" evidence="5 10 11 16 36 37 38 39 41 43">
    <location>
        <position position="165"/>
    </location>
    <ligand>
        <name>thiamine diphosphate</name>
        <dbReference type="ChEBI" id="CHEBI:58937"/>
        <note>ligand shared with beta subunit</note>
    </ligand>
</feature>
<feature type="binding site" evidence="35 44">
    <location>
        <position position="167"/>
    </location>
    <ligand>
        <name>pyruvate</name>
        <dbReference type="ChEBI" id="CHEBI:15361"/>
    </ligand>
</feature>
<feature type="binding site" evidence="5 10 11 16 36 37 38 39 41 43">
    <location>
        <position position="167"/>
    </location>
    <ligand>
        <name>thiamine diphosphate</name>
        <dbReference type="ChEBI" id="CHEBI:58937"/>
        <note>ligand shared with beta subunit</note>
    </ligand>
</feature>
<feature type="binding site" evidence="5 10 11 16 36 37 39 44">
    <location>
        <position position="196"/>
    </location>
    <ligand>
        <name>Mg(2+)</name>
        <dbReference type="ChEBI" id="CHEBI:18420"/>
    </ligand>
</feature>
<feature type="binding site" evidence="35 44">
    <location>
        <position position="196"/>
    </location>
    <ligand>
        <name>pyruvate</name>
        <dbReference type="ChEBI" id="CHEBI:15361"/>
    </ligand>
</feature>
<feature type="binding site" evidence="5 36">
    <location>
        <position position="196"/>
    </location>
    <ligand>
        <name>thiamine diphosphate</name>
        <dbReference type="ChEBI" id="CHEBI:58937"/>
        <note>ligand shared with beta subunit</note>
    </ligand>
</feature>
<feature type="binding site" evidence="35 44">
    <location>
        <position position="197"/>
    </location>
    <ligand>
        <name>pyruvate</name>
        <dbReference type="ChEBI" id="CHEBI:15361"/>
    </ligand>
</feature>
<feature type="binding site" evidence="5 10 11 36 37 38 39 41">
    <location>
        <position position="197"/>
    </location>
    <ligand>
        <name>thiamine diphosphate</name>
        <dbReference type="ChEBI" id="CHEBI:58937"/>
        <note>ligand shared with beta subunit</note>
    </ligand>
</feature>
<feature type="binding site" evidence="35 44">
    <location>
        <position position="198"/>
    </location>
    <ligand>
        <name>pyruvate</name>
        <dbReference type="ChEBI" id="CHEBI:15361"/>
    </ligand>
</feature>
<feature type="binding site" evidence="5 10 11 36 37 38 39 41">
    <location>
        <position position="198"/>
    </location>
    <ligand>
        <name>thiamine diphosphate</name>
        <dbReference type="ChEBI" id="CHEBI:58937"/>
        <note>ligand shared with beta subunit</note>
    </ligand>
</feature>
<feature type="binding site" evidence="5 10 11 16 36 37 39 44">
    <location>
        <position position="225"/>
    </location>
    <ligand>
        <name>Mg(2+)</name>
        <dbReference type="ChEBI" id="CHEBI:18420"/>
    </ligand>
</feature>
<feature type="binding site" evidence="35 44">
    <location>
        <position position="225"/>
    </location>
    <ligand>
        <name>pyruvate</name>
        <dbReference type="ChEBI" id="CHEBI:15361"/>
    </ligand>
</feature>
<feature type="binding site" evidence="5 10 11 36 37 38 39 41">
    <location>
        <position position="225"/>
    </location>
    <ligand>
        <name>thiamine diphosphate</name>
        <dbReference type="ChEBI" id="CHEBI:58937"/>
        <note>ligand shared with beta subunit</note>
    </ligand>
</feature>
<feature type="binding site" evidence="5 10 11 16 36 37 39 44">
    <location>
        <position position="227"/>
    </location>
    <ligand>
        <name>Mg(2+)</name>
        <dbReference type="ChEBI" id="CHEBI:18420"/>
    </ligand>
</feature>
<feature type="binding site" evidence="35 44">
    <location>
        <position position="227"/>
    </location>
    <ligand>
        <name>pyruvate</name>
        <dbReference type="ChEBI" id="CHEBI:15361"/>
    </ligand>
</feature>
<feature type="binding site" evidence="5 10 11 36 37 38 39">
    <location>
        <position position="292"/>
    </location>
    <ligand>
        <name>thiamine diphosphate</name>
        <dbReference type="ChEBI" id="CHEBI:58937"/>
        <note>ligand shared with beta subunit</note>
    </ligand>
</feature>
<feature type="modified residue" description="N6-acetyllysine; alternate" evidence="2">
    <location>
        <position position="63"/>
    </location>
</feature>
<feature type="modified residue" description="N6-succinyllysine; alternate" evidence="2">
    <location>
        <position position="63"/>
    </location>
</feature>
<feature type="modified residue" description="Phosphoserine; by PDK1" evidence="4 46 47 48">
    <location>
        <position position="232"/>
    </location>
</feature>
<feature type="modified residue" description="N6-acetyllysine; alternate" evidence="2">
    <location>
        <position position="244"/>
    </location>
</feature>
<feature type="modified residue" description="N6-succinyllysine; alternate" evidence="2">
    <location>
        <position position="244"/>
    </location>
</feature>
<feature type="modified residue" description="N6-succinyllysine" evidence="2">
    <location>
        <position position="277"/>
    </location>
</feature>
<feature type="modified residue" description="Phosphoserine; by PDK1, PDK2, PDK3 and PDK4" evidence="4 10 11">
    <location>
        <position position="293"/>
    </location>
</feature>
<feature type="modified residue" description="Phosphoserine" evidence="2">
    <location>
        <position position="295"/>
    </location>
</feature>
<feature type="modified residue" description="Phosphoserine; by PDK1, PDK2, PDK3 and PDK4" evidence="4 11">
    <location>
        <position position="300"/>
    </location>
</feature>
<feature type="modified residue" description="Phosphotyrosine" evidence="2">
    <location>
        <position position="301"/>
    </location>
</feature>
<feature type="modified residue" description="N6-acetyllysine; alternate" evidence="2">
    <location>
        <position position="313"/>
    </location>
</feature>
<feature type="modified residue" description="N6-succinyllysine; alternate" evidence="2">
    <location>
        <position position="313"/>
    </location>
</feature>
<feature type="modified residue" description="N6-acetyllysine" evidence="45">
    <location>
        <position position="321"/>
    </location>
</feature>
<feature type="modified residue" description="N6-acetyllysine" evidence="2">
    <location>
        <position position="336"/>
    </location>
</feature>
<feature type="modified residue" description="N6-succinyllysine" evidence="2">
    <location>
        <position position="385"/>
    </location>
</feature>
<feature type="splice variant" id="VSP_043363" description="In isoform 4." evidence="32 33">
    <original>P</original>
    <variation>PRHGLATLPSLVSISRLKQSSHLGLPKCWDYSHSLKTRQ</variation>
    <location>
        <position position="19"/>
    </location>
</feature>
<feature type="splice variant" id="VSP_042569" description="In isoform 2." evidence="32">
    <original>G</original>
    <variation>GQFLLPLT</variation>
    <location>
        <position position="96"/>
    </location>
</feature>
<feature type="splice variant" id="VSP_042570" description="In isoform 3." evidence="32">
    <location>
        <begin position="170"/>
        <end position="200"/>
    </location>
</feature>
<feature type="sequence variant" id="VAR_010238" description="In PDHAD; affects mitochondrial import of precursor protein; dbSNP:rs137853257." evidence="18">
    <original>R</original>
    <variation>P</variation>
    <location>
        <position position="10"/>
    </location>
</feature>
<feature type="sequence variant" id="VAR_004949" description="In PDHAD; dbSNP:rs863224148." evidence="21 27">
    <original>R</original>
    <variation>C</variation>
    <location>
        <position position="72"/>
    </location>
</feature>
<feature type="sequence variant" id="VAR_004950" description="In PDHAD." evidence="27">
    <original>H</original>
    <variation>D</variation>
    <location>
        <position position="113"/>
    </location>
</feature>
<feature type="sequence variant" id="VAR_069381" description="Found in a patient with moderate developmental delay, mild dysmorphism and mildly elevated serum lactate; uncertain significance; dbSNP:rs138727886." evidence="13">
    <original>A</original>
    <variation>T</variation>
    <location>
        <position position="136"/>
    </location>
</feature>
<feature type="sequence variant" id="VAR_004951" description="In PDHAD; dbSNP:rs866868610." evidence="27">
    <original>G</original>
    <variation>R</variation>
    <location>
        <position position="162"/>
    </location>
</feature>
<feature type="sequence variant" id="VAR_004952" description="In PDHAD; disrupts magnesium binding and results in deficient activity of the pyruvate dehydrogenase complex; dbSNP:rs2063174067." evidence="16 26">
    <original>V</original>
    <variation>M</variation>
    <location>
        <position position="167"/>
    </location>
</feature>
<feature type="sequence variant" id="VAR_004953" description="In PDHAD." evidence="26">
    <original>A</original>
    <variation>T</variation>
    <location>
        <position position="199"/>
    </location>
</feature>
<feature type="sequence variant" id="VAR_004954" description="In PDHAD; dbSNP:rs137853254." evidence="21 24">
    <original>F</original>
    <variation>L</variation>
    <location>
        <position position="205"/>
    </location>
</feature>
<feature type="sequence variant" id="VAR_004955" description="In PDHAD; dbSNP:rs794727843." evidence="28">
    <original>M</original>
    <variation>V</variation>
    <location>
        <position position="210"/>
    </location>
</feature>
<feature type="sequence variant" id="VAR_004956" description="In PDHAD; dbSNP:rs1131691792." evidence="19">
    <original>P</original>
    <variation>L</variation>
    <location>
        <position position="217"/>
    </location>
</feature>
<feature type="sequence variant" id="VAR_004957" description="In PDHAD." evidence="26">
    <original>T</original>
    <variation>A</variation>
    <location>
        <position position="231"/>
    </location>
</feature>
<feature type="sequence variant" id="VAR_021053" description="In PDHAD; dbSNP:rs137853255." evidence="23">
    <original>Y</original>
    <variation>N</variation>
    <location>
        <position position="243"/>
    </location>
</feature>
<feature type="sequence variant" id="VAR_004958" description="In PDHAD; dbSNP:rs137853253." evidence="25">
    <original>D</original>
    <variation>A</variation>
    <location>
        <position position="258"/>
    </location>
</feature>
<feature type="sequence variant" id="VAR_004959" description="In PDHAD; dbSNP:rs137853259." evidence="21 26 27 29">
    <original>R</original>
    <variation>G</variation>
    <location>
        <position position="263"/>
    </location>
</feature>
<feature type="sequence variant" id="VAR_004960" description="In PDHAD." evidence="22">
    <original>R</original>
    <variation>Q</variation>
    <location>
        <position position="263"/>
    </location>
</feature>
<feature type="sequence variant" id="VAR_021054" description="In dbSNP:rs2229137." evidence="3 23 31">
    <original>M</original>
    <variation>L</variation>
    <location>
        <position position="282"/>
    </location>
</feature>
<feature type="sequence variant" id="VAR_021055" description="In PDHAD; dbSNP:rs137853258." evidence="27">
    <original>R</original>
    <variation>H</variation>
    <location>
        <position position="288"/>
    </location>
</feature>
<feature type="sequence variant" id="VAR_004961" description="In PDHAD." evidence="26">
    <original>H</original>
    <variation>L</variation>
    <location>
        <position position="292"/>
    </location>
</feature>
<feature type="sequence variant" id="VAR_004962" description="In PDHAD; loss of activity; common mutation; dbSNP:rs137853252." evidence="6 15 27 30">
    <original>R</original>
    <variation>C</variation>
    <location>
        <position position="302"/>
    </location>
</feature>
<feature type="sequence variant" id="VAR_004963" description="In PDHAD; dbSNP:rs1064794149." evidence="30">
    <original>R</original>
    <variation>H</variation>
    <location>
        <position position="302"/>
    </location>
</feature>
<feature type="sequence variant" id="VAR_020908" description="In PDHAD." evidence="9">
    <original>E</original>
    <variation>EDSYRTRE</variation>
    <location>
        <position position="305"/>
    </location>
</feature>
<feature type="sequence variant" id="VAR_020909" description="In PDHAD." evidence="17">
    <original>I</original>
    <variation>IPPHSYRTREEI</variation>
    <location>
        <position position="307"/>
    </location>
</feature>
<feature type="sequence variant" id="VAR_004964" description="In PDHAD." evidence="21 28">
    <location>
        <position position="311"/>
    </location>
</feature>
<feature type="sequence variant" id="VAR_004965" description="In PDHAD; dbSNP:rs137853251." evidence="12">
    <location>
        <position position="313"/>
    </location>
</feature>
<feature type="sequence variant" id="VAR_021056" description="In PDHAD; dbSNP:rs137853256." evidence="23">
    <original>D</original>
    <variation>N</variation>
    <location>
        <position position="315"/>
    </location>
</feature>
<feature type="sequence variant" id="VAR_050436" description="In dbSNP:rs2228067.">
    <original>E</original>
    <variation>D</variation>
    <location>
        <position position="333"/>
    </location>
</feature>
<feature type="sequence variant" id="VAR_004966" description="In PDHAD; dbSNP:rs137853250." evidence="12 21 23">
    <original>R</original>
    <variation>H</variation>
    <location>
        <position position="378"/>
    </location>
</feature>
<feature type="mutagenesis site" description="Abolishes inactivation by phosphorylation; when associated with A-293 and A-300." evidence="20">
    <original>S</original>
    <variation>A</variation>
    <location>
        <position position="232"/>
    </location>
</feature>
<feature type="mutagenesis site" description="Reduces enzyme activity. Abolishes inactivation by phosphorylation; when associated with A-232 and A-300." evidence="10 20">
    <original>S</original>
    <variation>A</variation>
    <location>
        <position position="293"/>
    </location>
</feature>
<feature type="mutagenesis site" description="Interferes with substrate binding." evidence="10 20">
    <original>S</original>
    <variation>E</variation>
    <location>
        <position position="293"/>
    </location>
</feature>
<feature type="mutagenesis site" description="Abolishes inactivation by phosphorylation; when associated with A-232 and A-293." evidence="20">
    <original>S</original>
    <variation>A</variation>
    <location>
        <position position="300"/>
    </location>
</feature>
<feature type="sequence conflict" description="In Ref. 9; BAG35194." evidence="34" ref="9">
    <original>G</original>
    <variation>E</variation>
    <location>
        <position position="278"/>
    </location>
</feature>
<feature type="sequence conflict" description="In Ref. 15; AAD23857." evidence="34" ref="15">
    <original>Y</original>
    <variation>S</variation>
    <location>
        <position position="301"/>
    </location>
</feature>
<feature type="sequence conflict" description="In Ref. 15; AAD23857." evidence="34" ref="15">
    <original>E</original>
    <variation>D</variation>
    <location>
        <position position="306"/>
    </location>
</feature>
<feature type="sequence conflict" description="In Ref. 6; AAA60055." evidence="34" ref="6">
    <original>A</original>
    <variation>P</variation>
    <location>
        <position position="349"/>
    </location>
</feature>
<feature type="sequence conflict" description="In Ref. 6; AAA60055." evidence="34" ref="6">
    <original>T</original>
    <variation>A</variation>
    <location>
        <position position="354"/>
    </location>
</feature>
<feature type="strand" evidence="49">
    <location>
        <begin position="32"/>
        <end position="37"/>
    </location>
</feature>
<feature type="strand" evidence="49">
    <location>
        <begin position="42"/>
        <end position="45"/>
    </location>
</feature>
<feature type="strand" evidence="49">
    <location>
        <begin position="52"/>
        <end position="57"/>
    </location>
</feature>
<feature type="helix" evidence="49">
    <location>
        <begin position="58"/>
        <end position="83"/>
    </location>
</feature>
<feature type="strand" evidence="51">
    <location>
        <begin position="85"/>
        <end position="87"/>
    </location>
</feature>
<feature type="helix" evidence="49">
    <location>
        <begin position="98"/>
        <end position="106"/>
    </location>
</feature>
<feature type="strand" evidence="49">
    <location>
        <begin position="112"/>
        <end position="115"/>
    </location>
</feature>
<feature type="helix" evidence="49">
    <location>
        <begin position="121"/>
        <end position="126"/>
    </location>
</feature>
<feature type="helix" evidence="49">
    <location>
        <begin position="131"/>
        <end position="138"/>
    </location>
</feature>
<feature type="turn" evidence="49">
    <location>
        <begin position="145"/>
        <end position="148"/>
    </location>
</feature>
<feature type="helix" evidence="50">
    <location>
        <begin position="151"/>
        <end position="153"/>
    </location>
</feature>
<feature type="turn" evidence="49">
    <location>
        <begin position="167"/>
        <end position="169"/>
    </location>
</feature>
<feature type="helix" evidence="49">
    <location>
        <begin position="170"/>
        <end position="184"/>
    </location>
</feature>
<feature type="strand" evidence="49">
    <location>
        <begin position="190"/>
        <end position="195"/>
    </location>
</feature>
<feature type="helix" evidence="49">
    <location>
        <begin position="198"/>
        <end position="200"/>
    </location>
</feature>
<feature type="helix" evidence="49">
    <location>
        <begin position="202"/>
        <end position="213"/>
    </location>
</feature>
<feature type="strand" evidence="49">
    <location>
        <begin position="218"/>
        <end position="224"/>
    </location>
</feature>
<feature type="strand" evidence="49">
    <location>
        <begin position="226"/>
        <end position="228"/>
    </location>
</feature>
<feature type="helix" evidence="49">
    <location>
        <begin position="233"/>
        <end position="236"/>
    </location>
</feature>
<feature type="helix" evidence="49">
    <location>
        <begin position="242"/>
        <end position="244"/>
    </location>
</feature>
<feature type="turn" evidence="49">
    <location>
        <begin position="245"/>
        <end position="248"/>
    </location>
</feature>
<feature type="strand" evidence="49">
    <location>
        <begin position="251"/>
        <end position="255"/>
    </location>
</feature>
<feature type="helix" evidence="49">
    <location>
        <begin position="259"/>
        <end position="274"/>
    </location>
</feature>
<feature type="turn" evidence="52">
    <location>
        <begin position="275"/>
        <end position="277"/>
    </location>
</feature>
<feature type="strand" evidence="49">
    <location>
        <begin position="280"/>
        <end position="285"/>
    </location>
</feature>
<feature type="strand" evidence="49">
    <location>
        <begin position="300"/>
        <end position="302"/>
    </location>
</feature>
<feature type="helix" evidence="49">
    <location>
        <begin position="304"/>
        <end position="314"/>
    </location>
</feature>
<feature type="helix" evidence="49">
    <location>
        <begin position="316"/>
        <end position="326"/>
    </location>
</feature>
<feature type="helix" evidence="49">
    <location>
        <begin position="332"/>
        <end position="355"/>
    </location>
</feature>
<feature type="helix" evidence="49">
    <location>
        <begin position="361"/>
        <end position="363"/>
    </location>
</feature>
<feature type="strand" evidence="49">
    <location>
        <begin position="367"/>
        <end position="371"/>
    </location>
</feature>
<feature type="strand" evidence="49">
    <location>
        <begin position="375"/>
        <end position="378"/>
    </location>
</feature>
<feature type="strand" evidence="49">
    <location>
        <begin position="385"/>
        <end position="388"/>
    </location>
</feature>
<sequence length="390" mass="43296">MRKMLAAVSRVLSGASQKPASRVLVASRNFANDATFEIKKCDLHRLEEGPPVTTVLTREDGLKYYRMMQTVRRMELKADQLYKQKIIRGFCHLCDGQEACCVGLEAGINPTDHLITAYRAHGFTFTRGLSVREILAELTGRKGGCAKGKGGSMHMYAKNFYGGNGIVGAQVPLGAGIALACKYNGKDEVCLTLYGDGAANQGQIFEAYNMAALWKLPCIFICENNRYGMGTSVERAAASTDYYKRGDFIPGLRVDGMDILCVREATRFAAAYCRSGKGPILMELQTYRYHGHSMSDPGVSYRTREEIQEVRSKSDPIMLLKDRMVNSNLASVEELKEIDVEVRKEIEDAAQFATADPEPPLEELGYHIYSSDPPFEVRGANQWIKFKSVS</sequence>
<dbReference type="EC" id="1.2.4.1"/>
<dbReference type="EMBL" id="D90084">
    <property type="protein sequence ID" value="BAA14121.1"/>
    <property type="molecule type" value="Genomic_DNA"/>
</dbReference>
<dbReference type="EMBL" id="M24848">
    <property type="protein sequence ID" value="AAA36533.1"/>
    <property type="molecule type" value="mRNA"/>
</dbReference>
<dbReference type="EMBL" id="X52709">
    <property type="protein sequence ID" value="CAA36933.1"/>
    <property type="molecule type" value="mRNA"/>
</dbReference>
<dbReference type="EMBL" id="X52710">
    <property type="protein sequence ID" value="CAA36934.1"/>
    <property type="molecule type" value="mRNA"/>
</dbReference>
<dbReference type="EMBL" id="M27257">
    <property type="protein sequence ID" value="AAA60051.1"/>
    <property type="molecule type" value="Genomic_DNA"/>
</dbReference>
<dbReference type="EMBL" id="M29155">
    <property type="protein sequence ID" value="AAA60051.1"/>
    <property type="status" value="JOINED"/>
    <property type="molecule type" value="Genomic_DNA"/>
</dbReference>
<dbReference type="EMBL" id="M29156">
    <property type="protein sequence ID" value="AAA60051.1"/>
    <property type="status" value="JOINED"/>
    <property type="molecule type" value="Genomic_DNA"/>
</dbReference>
<dbReference type="EMBL" id="M29157">
    <property type="protein sequence ID" value="AAA60051.1"/>
    <property type="status" value="JOINED"/>
    <property type="molecule type" value="Genomic_DNA"/>
</dbReference>
<dbReference type="EMBL" id="M29158">
    <property type="protein sequence ID" value="AAA60051.1"/>
    <property type="status" value="JOINED"/>
    <property type="molecule type" value="Genomic_DNA"/>
</dbReference>
<dbReference type="EMBL" id="M29159">
    <property type="protein sequence ID" value="AAA60051.1"/>
    <property type="status" value="JOINED"/>
    <property type="molecule type" value="Genomic_DNA"/>
</dbReference>
<dbReference type="EMBL" id="M29160">
    <property type="protein sequence ID" value="AAA60051.1"/>
    <property type="status" value="JOINED"/>
    <property type="molecule type" value="Genomic_DNA"/>
</dbReference>
<dbReference type="EMBL" id="M29161">
    <property type="protein sequence ID" value="AAA60051.1"/>
    <property type="status" value="JOINED"/>
    <property type="molecule type" value="Genomic_DNA"/>
</dbReference>
<dbReference type="EMBL" id="M29162">
    <property type="protein sequence ID" value="AAA60051.1"/>
    <property type="status" value="JOINED"/>
    <property type="molecule type" value="Genomic_DNA"/>
</dbReference>
<dbReference type="EMBL" id="M29163">
    <property type="protein sequence ID" value="AAA60051.1"/>
    <property type="status" value="JOINED"/>
    <property type="molecule type" value="Genomic_DNA"/>
</dbReference>
<dbReference type="EMBL" id="M29164">
    <property type="protein sequence ID" value="AAA60051.1"/>
    <property type="status" value="JOINED"/>
    <property type="molecule type" value="Genomic_DNA"/>
</dbReference>
<dbReference type="EMBL" id="L13318">
    <property type="protein sequence ID" value="AAA60227.1"/>
    <property type="molecule type" value="mRNA"/>
</dbReference>
<dbReference type="EMBL" id="J03503">
    <property type="protein sequence ID" value="AAA60055.1"/>
    <property type="status" value="ALT_INIT"/>
    <property type="molecule type" value="mRNA"/>
</dbReference>
<dbReference type="EMBL" id="J03575">
    <property type="protein sequence ID" value="AAA60050.1"/>
    <property type="molecule type" value="mRNA"/>
</dbReference>
<dbReference type="EMBL" id="L48690">
    <property type="protein sequence ID" value="AAB59581.1"/>
    <property type="status" value="ALT_FRAME"/>
    <property type="molecule type" value="mRNA"/>
</dbReference>
<dbReference type="EMBL" id="EF590117">
    <property type="protein sequence ID" value="ABQ59099.1"/>
    <property type="molecule type" value="mRNA"/>
</dbReference>
<dbReference type="EMBL" id="AK293250">
    <property type="protein sequence ID" value="BAH11476.1"/>
    <property type="molecule type" value="mRNA"/>
</dbReference>
<dbReference type="EMBL" id="AK296457">
    <property type="protein sequence ID" value="BAH12361.1"/>
    <property type="molecule type" value="mRNA"/>
</dbReference>
<dbReference type="EMBL" id="AK312263">
    <property type="protein sequence ID" value="BAG35194.1"/>
    <property type="molecule type" value="mRNA"/>
</dbReference>
<dbReference type="EMBL" id="AK296341">
    <property type="protein sequence ID" value="BAH12323.1"/>
    <property type="molecule type" value="mRNA"/>
</dbReference>
<dbReference type="EMBL" id="AK222740">
    <property type="protein sequence ID" value="BAD96460.1"/>
    <property type="molecule type" value="mRNA"/>
</dbReference>
<dbReference type="EMBL" id="AL732326">
    <property type="status" value="NOT_ANNOTATED_CDS"/>
    <property type="molecule type" value="Genomic_DNA"/>
</dbReference>
<dbReference type="EMBL" id="CH471074">
    <property type="protein sequence ID" value="EAW98960.1"/>
    <property type="molecule type" value="Genomic_DNA"/>
</dbReference>
<dbReference type="EMBL" id="BC002406">
    <property type="protein sequence ID" value="AAH02406.1"/>
    <property type="molecule type" value="mRNA"/>
</dbReference>
<dbReference type="EMBL" id="AF125053">
    <property type="protein sequence ID" value="AAD23841.1"/>
    <property type="molecule type" value="Genomic_DNA"/>
</dbReference>
<dbReference type="EMBL" id="AF125054">
    <property type="protein sequence ID" value="AAD23842.1"/>
    <property type="molecule type" value="Genomic_DNA"/>
</dbReference>
<dbReference type="EMBL" id="AF125055">
    <property type="protein sequence ID" value="AAD23843.1"/>
    <property type="molecule type" value="Genomic_DNA"/>
</dbReference>
<dbReference type="EMBL" id="AF125056">
    <property type="protein sequence ID" value="AAD23844.1"/>
    <property type="molecule type" value="Genomic_DNA"/>
</dbReference>
<dbReference type="EMBL" id="AF125057">
    <property type="protein sequence ID" value="AAD23845.1"/>
    <property type="molecule type" value="Genomic_DNA"/>
</dbReference>
<dbReference type="EMBL" id="AF125058">
    <property type="protein sequence ID" value="AAD23846.1"/>
    <property type="molecule type" value="Genomic_DNA"/>
</dbReference>
<dbReference type="EMBL" id="AF125059">
    <property type="protein sequence ID" value="AAD23847.1"/>
    <property type="molecule type" value="Genomic_DNA"/>
</dbReference>
<dbReference type="EMBL" id="AF125060">
    <property type="protein sequence ID" value="AAD23848.1"/>
    <property type="molecule type" value="Genomic_DNA"/>
</dbReference>
<dbReference type="EMBL" id="AF125061">
    <property type="protein sequence ID" value="AAD23849.1"/>
    <property type="molecule type" value="Genomic_DNA"/>
</dbReference>
<dbReference type="EMBL" id="AF125062">
    <property type="protein sequence ID" value="AAD23850.1"/>
    <property type="molecule type" value="Genomic_DNA"/>
</dbReference>
<dbReference type="EMBL" id="AF125063">
    <property type="protein sequence ID" value="AAD23851.1"/>
    <property type="molecule type" value="Genomic_DNA"/>
</dbReference>
<dbReference type="EMBL" id="AF125064">
    <property type="protein sequence ID" value="AAD23852.1"/>
    <property type="molecule type" value="Genomic_DNA"/>
</dbReference>
<dbReference type="EMBL" id="AF125065">
    <property type="protein sequence ID" value="AAD23853.1"/>
    <property type="molecule type" value="Genomic_DNA"/>
</dbReference>
<dbReference type="EMBL" id="AF125066">
    <property type="protein sequence ID" value="AAD23854.1"/>
    <property type="molecule type" value="Genomic_DNA"/>
</dbReference>
<dbReference type="EMBL" id="AF125067">
    <property type="protein sequence ID" value="AAD23855.1"/>
    <property type="molecule type" value="Genomic_DNA"/>
</dbReference>
<dbReference type="EMBL" id="AF125068">
    <property type="protein sequence ID" value="AAD23856.1"/>
    <property type="molecule type" value="Genomic_DNA"/>
</dbReference>
<dbReference type="EMBL" id="AF125069">
    <property type="protein sequence ID" value="AAD23857.1"/>
    <property type="molecule type" value="Genomic_DNA"/>
</dbReference>
<dbReference type="EMBL" id="AF125070">
    <property type="protein sequence ID" value="AAD23858.1"/>
    <property type="molecule type" value="Genomic_DNA"/>
</dbReference>
<dbReference type="EMBL" id="AF125071">
    <property type="protein sequence ID" value="AAD23859.1"/>
    <property type="molecule type" value="Genomic_DNA"/>
</dbReference>
<dbReference type="EMBL" id="AF125072">
    <property type="protein sequence ID" value="AAD23860.1"/>
    <property type="molecule type" value="Genomic_DNA"/>
</dbReference>
<dbReference type="EMBL" id="AF125073">
    <property type="protein sequence ID" value="AAD23861.1"/>
    <property type="molecule type" value="Genomic_DNA"/>
</dbReference>
<dbReference type="EMBL" id="AF125074">
    <property type="protein sequence ID" value="AAD23862.1"/>
    <property type="molecule type" value="Genomic_DNA"/>
</dbReference>
<dbReference type="EMBL" id="AF125075">
    <property type="protein sequence ID" value="AAD23863.1"/>
    <property type="molecule type" value="Genomic_DNA"/>
</dbReference>
<dbReference type="EMBL" id="AF125076">
    <property type="protein sequence ID" value="AAD23864.1"/>
    <property type="molecule type" value="Genomic_DNA"/>
</dbReference>
<dbReference type="EMBL" id="AF125078">
    <property type="protein sequence ID" value="AAD23866.1"/>
    <property type="molecule type" value="Genomic_DNA"/>
</dbReference>
<dbReference type="EMBL" id="AF125079">
    <property type="protein sequence ID" value="AAD23867.1"/>
    <property type="molecule type" value="Genomic_DNA"/>
</dbReference>
<dbReference type="EMBL" id="AF125080">
    <property type="protein sequence ID" value="AAD23868.1"/>
    <property type="molecule type" value="Genomic_DNA"/>
</dbReference>
<dbReference type="EMBL" id="AF125081">
    <property type="protein sequence ID" value="AAD23869.1"/>
    <property type="molecule type" value="Genomic_DNA"/>
</dbReference>
<dbReference type="EMBL" id="AF125082">
    <property type="protein sequence ID" value="AAD23870.1"/>
    <property type="molecule type" value="Genomic_DNA"/>
</dbReference>
<dbReference type="EMBL" id="AF125083">
    <property type="protein sequence ID" value="AAD23871.1"/>
    <property type="molecule type" value="Genomic_DNA"/>
</dbReference>
<dbReference type="EMBL" id="AF125084">
    <property type="protein sequence ID" value="AAD23872.1"/>
    <property type="molecule type" value="Genomic_DNA"/>
</dbReference>
<dbReference type="EMBL" id="AF125085">
    <property type="protein sequence ID" value="AAD23873.1"/>
    <property type="molecule type" value="Genomic_DNA"/>
</dbReference>
<dbReference type="EMBL" id="AF125086">
    <property type="protein sequence ID" value="AAD23874.1"/>
    <property type="molecule type" value="Genomic_DNA"/>
</dbReference>
<dbReference type="EMBL" id="AF125087">
    <property type="protein sequence ID" value="AAD23875.1"/>
    <property type="molecule type" value="Genomic_DNA"/>
</dbReference>
<dbReference type="EMBL" id="AF125088">
    <property type="protein sequence ID" value="AAD23876.1"/>
    <property type="molecule type" value="Genomic_DNA"/>
</dbReference>
<dbReference type="CCDS" id="CCDS14192.1">
    <molecule id="P08559-1"/>
</dbReference>
<dbReference type="CCDS" id="CCDS55380.1">
    <molecule id="P08559-4"/>
</dbReference>
<dbReference type="CCDS" id="CCDS55381.1">
    <molecule id="P08559-2"/>
</dbReference>
<dbReference type="CCDS" id="CCDS55382.1">
    <molecule id="P08559-3"/>
</dbReference>
<dbReference type="PIR" id="JQ0770">
    <property type="entry name" value="DEHUPA"/>
</dbReference>
<dbReference type="RefSeq" id="NP_000275.1">
    <molecule id="P08559-1"/>
    <property type="nucleotide sequence ID" value="NM_000284.4"/>
</dbReference>
<dbReference type="RefSeq" id="NP_001166925.1">
    <molecule id="P08559-4"/>
    <property type="nucleotide sequence ID" value="NM_001173454.2"/>
</dbReference>
<dbReference type="RefSeq" id="NP_001166926.1">
    <molecule id="P08559-2"/>
    <property type="nucleotide sequence ID" value="NM_001173455.2"/>
</dbReference>
<dbReference type="RefSeq" id="NP_001166927.1">
    <molecule id="P08559-3"/>
    <property type="nucleotide sequence ID" value="NM_001173456.2"/>
</dbReference>
<dbReference type="PDB" id="1NI4">
    <property type="method" value="X-ray"/>
    <property type="resolution" value="1.95 A"/>
    <property type="chains" value="A/C=30-390"/>
</dbReference>
<dbReference type="PDB" id="2OZL">
    <property type="method" value="X-ray"/>
    <property type="resolution" value="1.90 A"/>
    <property type="chains" value="A/C=30-390"/>
</dbReference>
<dbReference type="PDB" id="3EXE">
    <property type="method" value="X-ray"/>
    <property type="resolution" value="1.98 A"/>
    <property type="chains" value="A/C/E/G=30-390"/>
</dbReference>
<dbReference type="PDB" id="3EXF">
    <property type="method" value="X-ray"/>
    <property type="resolution" value="3.00 A"/>
    <property type="chains" value="A/C/E/G=30-390"/>
</dbReference>
<dbReference type="PDB" id="3EXG">
    <property type="method" value="X-ray"/>
    <property type="resolution" value="3.01 A"/>
    <property type="chains" value="1/3/5/A/C/E/G/I/K/M/O/Q/S/U/W/Y=30-390"/>
</dbReference>
<dbReference type="PDB" id="3EXH">
    <property type="method" value="X-ray"/>
    <property type="resolution" value="2.44 A"/>
    <property type="chains" value="A/C/E/G=30-390"/>
</dbReference>
<dbReference type="PDB" id="3EXI">
    <property type="method" value="X-ray"/>
    <property type="resolution" value="2.20 A"/>
    <property type="chains" value="A=30-390"/>
</dbReference>
<dbReference type="PDB" id="6CER">
    <property type="method" value="X-ray"/>
    <property type="resolution" value="2.69 A"/>
    <property type="chains" value="A/C/E/G=30-390"/>
</dbReference>
<dbReference type="PDB" id="6CFO">
    <property type="method" value="X-ray"/>
    <property type="resolution" value="2.70 A"/>
    <property type="chains" value="A/C=30-390"/>
</dbReference>
<dbReference type="PDBsum" id="1NI4"/>
<dbReference type="PDBsum" id="2OZL"/>
<dbReference type="PDBsum" id="3EXE"/>
<dbReference type="PDBsum" id="3EXF"/>
<dbReference type="PDBsum" id="3EXG"/>
<dbReference type="PDBsum" id="3EXH"/>
<dbReference type="PDBsum" id="3EXI"/>
<dbReference type="PDBsum" id="6CER"/>
<dbReference type="PDBsum" id="6CFO"/>
<dbReference type="SMR" id="P08559"/>
<dbReference type="BioGRID" id="111186">
    <property type="interactions" value="759"/>
</dbReference>
<dbReference type="ComplexPortal" id="CPX-376">
    <property type="entry name" value="Pyruvate dehydrogenase E1 heterotetramer"/>
</dbReference>
<dbReference type="ComplexPortal" id="CPX-6233">
    <property type="entry name" value="Mitochondrial pyruvate dehydrogenase complex, somatic variant"/>
</dbReference>
<dbReference type="DIP" id="DIP-37652N"/>
<dbReference type="FunCoup" id="P08559">
    <property type="interactions" value="1741"/>
</dbReference>
<dbReference type="IntAct" id="P08559">
    <property type="interactions" value="283"/>
</dbReference>
<dbReference type="MINT" id="P08559"/>
<dbReference type="STRING" id="9606.ENSP00000369134"/>
<dbReference type="DrugBank" id="DB00157">
    <property type="generic name" value="NADH"/>
</dbReference>
<dbReference type="GlyCosmos" id="P08559">
    <property type="glycosylation" value="1 site, 1 glycan"/>
</dbReference>
<dbReference type="GlyGen" id="P08559">
    <property type="glycosylation" value="1 site, 1 O-linked glycan (1 site)"/>
</dbReference>
<dbReference type="iPTMnet" id="P08559"/>
<dbReference type="MetOSite" id="P08559"/>
<dbReference type="PhosphoSitePlus" id="P08559"/>
<dbReference type="SwissPalm" id="P08559"/>
<dbReference type="BioMuta" id="PDHA1"/>
<dbReference type="DMDM" id="129063"/>
<dbReference type="REPRODUCTION-2DPAGE" id="IPI00306301"/>
<dbReference type="CPTAC" id="CPTAC-2758"/>
<dbReference type="jPOST" id="P08559"/>
<dbReference type="MassIVE" id="P08559"/>
<dbReference type="PaxDb" id="9606-ENSP00000369134"/>
<dbReference type="PeptideAtlas" id="P08559"/>
<dbReference type="ProteomicsDB" id="52117">
    <molecule id="P08559-1"/>
</dbReference>
<dbReference type="ProteomicsDB" id="52118">
    <molecule id="P08559-2"/>
</dbReference>
<dbReference type="ProteomicsDB" id="52119">
    <molecule id="P08559-3"/>
</dbReference>
<dbReference type="ProteomicsDB" id="52120">
    <molecule id="P08559-4"/>
</dbReference>
<dbReference type="Pumba" id="P08559"/>
<dbReference type="TopDownProteomics" id="P08559-3">
    <molecule id="P08559-3"/>
</dbReference>
<dbReference type="TopDownProteomics" id="P08559-4">
    <molecule id="P08559-4"/>
</dbReference>
<dbReference type="Antibodypedia" id="24225">
    <property type="antibodies" value="686 antibodies from 38 providers"/>
</dbReference>
<dbReference type="DNASU" id="5160"/>
<dbReference type="Ensembl" id="ENST00000355808.10">
    <molecule id="P08559-2"/>
    <property type="protein sequence ID" value="ENSP00000348062.6"/>
    <property type="gene ID" value="ENSG00000131828.14"/>
</dbReference>
<dbReference type="Ensembl" id="ENST00000422285.7">
    <molecule id="P08559-1"/>
    <property type="protein sequence ID" value="ENSP00000394382.2"/>
    <property type="gene ID" value="ENSG00000131828.14"/>
</dbReference>
<dbReference type="Ensembl" id="ENST00000423505.6">
    <molecule id="P08559-4"/>
    <property type="protein sequence ID" value="ENSP00000406473.2"/>
    <property type="gene ID" value="ENSG00000131828.14"/>
</dbReference>
<dbReference type="Ensembl" id="ENST00000540249.5">
    <molecule id="P08559-3"/>
    <property type="protein sequence ID" value="ENSP00000440761.1"/>
    <property type="gene ID" value="ENSG00000131828.14"/>
</dbReference>
<dbReference type="GeneID" id="5160"/>
<dbReference type="KEGG" id="hsa:5160"/>
<dbReference type="MANE-Select" id="ENST00000422285.7">
    <property type="protein sequence ID" value="ENSP00000394382.2"/>
    <property type="RefSeq nucleotide sequence ID" value="NM_000284.4"/>
    <property type="RefSeq protein sequence ID" value="NP_000275.1"/>
</dbReference>
<dbReference type="UCSC" id="uc004czg.5">
    <molecule id="P08559-1"/>
    <property type="organism name" value="human"/>
</dbReference>
<dbReference type="AGR" id="HGNC:8806"/>
<dbReference type="CTD" id="5160"/>
<dbReference type="DisGeNET" id="5160"/>
<dbReference type="GeneCards" id="PDHA1"/>
<dbReference type="GeneReviews" id="PDHA1"/>
<dbReference type="HGNC" id="HGNC:8806">
    <property type="gene designation" value="PDHA1"/>
</dbReference>
<dbReference type="HPA" id="ENSG00000131828">
    <property type="expression patterns" value="Tissue enhanced (heart muscle, skeletal muscle, tongue)"/>
</dbReference>
<dbReference type="MalaCards" id="PDHA1"/>
<dbReference type="MIM" id="300502">
    <property type="type" value="gene"/>
</dbReference>
<dbReference type="MIM" id="312170">
    <property type="type" value="phenotype"/>
</dbReference>
<dbReference type="neXtProt" id="NX_P08559"/>
<dbReference type="OpenTargets" id="ENSG00000131828"/>
<dbReference type="Orphanet" id="79243">
    <property type="disease" value="Pyruvate dehydrogenase E1-alpha deficiency"/>
</dbReference>
<dbReference type="PharmGKB" id="PA33150"/>
<dbReference type="VEuPathDB" id="HostDB:ENSG00000131828"/>
<dbReference type="eggNOG" id="KOG0225">
    <property type="taxonomic scope" value="Eukaryota"/>
</dbReference>
<dbReference type="GeneTree" id="ENSGT00530000063174"/>
<dbReference type="HOGENOM" id="CLU_029393_5_2_1"/>
<dbReference type="InParanoid" id="P08559"/>
<dbReference type="OMA" id="LGYEMPC"/>
<dbReference type="OrthoDB" id="10256198at2759"/>
<dbReference type="PAN-GO" id="P08559">
    <property type="GO annotations" value="2 GO annotations based on evolutionary models"/>
</dbReference>
<dbReference type="PhylomeDB" id="P08559"/>
<dbReference type="TreeFam" id="TF300742"/>
<dbReference type="BioCyc" id="MetaCyc:HS05573-MONOMER"/>
<dbReference type="BRENDA" id="1.2.1.104">
    <property type="organism ID" value="2681"/>
</dbReference>
<dbReference type="BRENDA" id="1.2.4.1">
    <property type="organism ID" value="2681"/>
</dbReference>
<dbReference type="PathwayCommons" id="P08559"/>
<dbReference type="Reactome" id="R-HSA-204174">
    <property type="pathway name" value="Regulation of pyruvate dehydrogenase (PDH) complex"/>
</dbReference>
<dbReference type="Reactome" id="R-HSA-5362517">
    <property type="pathway name" value="Signaling by Retinoic Acid"/>
</dbReference>
<dbReference type="Reactome" id="R-HSA-9837999">
    <property type="pathway name" value="Mitochondrial protein degradation"/>
</dbReference>
<dbReference type="Reactome" id="R-HSA-9861559">
    <property type="pathway name" value="PDH complex synthesizes acetyl-CoA from PYR"/>
</dbReference>
<dbReference type="SABIO-RK" id="P08559"/>
<dbReference type="SignaLink" id="P08559"/>
<dbReference type="SIGNOR" id="P08559"/>
<dbReference type="BioGRID-ORCS" id="5160">
    <property type="hits" value="41 hits in 791 CRISPR screens"/>
</dbReference>
<dbReference type="CD-CODE" id="91857CE7">
    <property type="entry name" value="Nucleolus"/>
</dbReference>
<dbReference type="CD-CODE" id="FB4E32DD">
    <property type="entry name" value="Presynaptic clusters and postsynaptic densities"/>
</dbReference>
<dbReference type="ChiTaRS" id="PDHA1">
    <property type="organism name" value="human"/>
</dbReference>
<dbReference type="EvolutionaryTrace" id="P08559"/>
<dbReference type="GeneWiki" id="Pyruvate_dehydrogenase_(lipoamide)_alpha_1"/>
<dbReference type="GenomeRNAi" id="5160"/>
<dbReference type="Pharos" id="P08559">
    <property type="development level" value="Tbio"/>
</dbReference>
<dbReference type="PRO" id="PR:P08559"/>
<dbReference type="Proteomes" id="UP000005640">
    <property type="component" value="Chromosome X"/>
</dbReference>
<dbReference type="RNAct" id="P08559">
    <property type="molecule type" value="protein"/>
</dbReference>
<dbReference type="Bgee" id="ENSG00000131828">
    <property type="expression patterns" value="Expressed in apex of heart and 206 other cell types or tissues"/>
</dbReference>
<dbReference type="ExpressionAtlas" id="P08559">
    <property type="expression patterns" value="baseline and differential"/>
</dbReference>
<dbReference type="GO" id="GO:0005759">
    <property type="term" value="C:mitochondrial matrix"/>
    <property type="evidence" value="ECO:0000304"/>
    <property type="project" value="Reactome"/>
</dbReference>
<dbReference type="GO" id="GO:0005739">
    <property type="term" value="C:mitochondrion"/>
    <property type="evidence" value="ECO:0000314"/>
    <property type="project" value="HPA"/>
</dbReference>
<dbReference type="GO" id="GO:0005730">
    <property type="term" value="C:nucleolus"/>
    <property type="evidence" value="ECO:0000314"/>
    <property type="project" value="HPA"/>
</dbReference>
<dbReference type="GO" id="GO:0005634">
    <property type="term" value="C:nucleus"/>
    <property type="evidence" value="ECO:0007005"/>
    <property type="project" value="UniProtKB"/>
</dbReference>
<dbReference type="GO" id="GO:0045254">
    <property type="term" value="C:pyruvate dehydrogenase complex"/>
    <property type="evidence" value="ECO:0000314"/>
    <property type="project" value="UniProtKB"/>
</dbReference>
<dbReference type="GO" id="GO:0046872">
    <property type="term" value="F:metal ion binding"/>
    <property type="evidence" value="ECO:0007669"/>
    <property type="project" value="UniProtKB-KW"/>
</dbReference>
<dbReference type="GO" id="GO:0004739">
    <property type="term" value="F:pyruvate dehydrogenase (acetyl-transferring) activity"/>
    <property type="evidence" value="ECO:0007669"/>
    <property type="project" value="UniProtKB-EC"/>
</dbReference>
<dbReference type="GO" id="GO:0034604">
    <property type="term" value="F:pyruvate dehydrogenase (NAD+) activity"/>
    <property type="evidence" value="ECO:0007669"/>
    <property type="project" value="Ensembl"/>
</dbReference>
<dbReference type="GO" id="GO:0006006">
    <property type="term" value="P:glucose metabolic process"/>
    <property type="evidence" value="ECO:0007669"/>
    <property type="project" value="UniProtKB-KW"/>
</dbReference>
<dbReference type="GO" id="GO:0006086">
    <property type="term" value="P:pyruvate decarboxylation to acetyl-CoA"/>
    <property type="evidence" value="ECO:0000314"/>
    <property type="project" value="UniProtKB"/>
</dbReference>
<dbReference type="GO" id="GO:0006099">
    <property type="term" value="P:tricarboxylic acid cycle"/>
    <property type="evidence" value="ECO:0007669"/>
    <property type="project" value="UniProtKB-KW"/>
</dbReference>
<dbReference type="CDD" id="cd02000">
    <property type="entry name" value="TPP_E1_PDC_ADC_BCADC"/>
    <property type="match status" value="1"/>
</dbReference>
<dbReference type="FunFam" id="3.40.50.970:FF:000020">
    <property type="entry name" value="Pyruvate dehydrogenase E1 component subunit alpha, mitochondrial"/>
    <property type="match status" value="1"/>
</dbReference>
<dbReference type="Gene3D" id="3.40.50.970">
    <property type="match status" value="1"/>
</dbReference>
<dbReference type="InterPro" id="IPR001017">
    <property type="entry name" value="DH_E1"/>
</dbReference>
<dbReference type="InterPro" id="IPR050642">
    <property type="entry name" value="PDH_E1_Alpha_Subunit"/>
</dbReference>
<dbReference type="InterPro" id="IPR017597">
    <property type="entry name" value="Pyrv_DH_E1_asu_subgrp-y"/>
</dbReference>
<dbReference type="InterPro" id="IPR029061">
    <property type="entry name" value="THDP-binding"/>
</dbReference>
<dbReference type="NCBIfam" id="TIGR03182">
    <property type="entry name" value="PDH_E1_alph_y"/>
    <property type="match status" value="1"/>
</dbReference>
<dbReference type="PANTHER" id="PTHR11516:SF52">
    <property type="entry name" value="PYRUVATE DEHYDROGENASE E1 COMPONENT SUBUNIT ALPHA, SOMATIC FORM, MITOCHONDRIAL"/>
    <property type="match status" value="1"/>
</dbReference>
<dbReference type="PANTHER" id="PTHR11516">
    <property type="entry name" value="PYRUVATE DEHYDROGENASE E1 COMPONENT, ALPHA SUBUNIT BACTERIAL AND ORGANELLAR"/>
    <property type="match status" value="1"/>
</dbReference>
<dbReference type="Pfam" id="PF00676">
    <property type="entry name" value="E1_dh"/>
    <property type="match status" value="1"/>
</dbReference>
<dbReference type="SUPFAM" id="SSF52518">
    <property type="entry name" value="Thiamin diphosphate-binding fold (THDP-binding)"/>
    <property type="match status" value="1"/>
</dbReference>